<name>RS19_THET8</name>
<protein>
    <recommendedName>
        <fullName evidence="3">Small ribosomal subunit protein uS19</fullName>
    </recommendedName>
    <alternativeName>
        <fullName>30S ribosomal protein S19</fullName>
    </alternativeName>
</protein>
<accession>Q5SHP2</accession>
<feature type="initiator methionine" description="Removed" evidence="2">
    <location>
        <position position="1"/>
    </location>
</feature>
<feature type="chain" id="PRO_0000129927" description="Small ribosomal subunit protein uS19">
    <location>
        <begin position="2"/>
        <end position="93"/>
    </location>
</feature>
<feature type="strand" evidence="7">
    <location>
        <begin position="6"/>
        <end position="8"/>
    </location>
</feature>
<feature type="helix" evidence="5">
    <location>
        <begin position="13"/>
        <end position="25"/>
    </location>
</feature>
<feature type="strand" evidence="5">
    <location>
        <begin position="31"/>
        <end position="33"/>
    </location>
</feature>
<feature type="strand" evidence="5">
    <location>
        <begin position="36"/>
        <end position="39"/>
    </location>
</feature>
<feature type="helix" evidence="5">
    <location>
        <begin position="42"/>
        <end position="44"/>
    </location>
</feature>
<feature type="strand" evidence="6">
    <location>
        <begin position="45"/>
        <end position="47"/>
    </location>
</feature>
<feature type="strand" evidence="5">
    <location>
        <begin position="48"/>
        <end position="52"/>
    </location>
</feature>
<feature type="strand" evidence="5">
    <location>
        <begin position="54"/>
        <end position="61"/>
    </location>
</feature>
<feature type="helix" evidence="5">
    <location>
        <begin position="64"/>
        <end position="66"/>
    </location>
</feature>
<feature type="strand" evidence="4">
    <location>
        <begin position="68"/>
        <end position="70"/>
    </location>
</feature>
<feature type="helix" evidence="5">
    <location>
        <begin position="71"/>
        <end position="74"/>
    </location>
</feature>
<feature type="helix" evidence="5">
    <location>
        <begin position="85"/>
        <end position="87"/>
    </location>
</feature>
<proteinExistence type="evidence at protein level"/>
<sequence length="93" mass="10581">MPRSLKKGVFVDDHLLEKVLELNAKGEKRLIKTWSRRSTIVPEMVGHTIAVYNGKQHVPVYITENMVGHKLGEFAPTRTYRGHGKEAKATKKK</sequence>
<gene>
    <name type="primary">rpsS</name>
    <name type="ordered locus">TTHA1688</name>
</gene>
<keyword id="KW-0002">3D-structure</keyword>
<keyword id="KW-0903">Direct protein sequencing</keyword>
<keyword id="KW-1185">Reference proteome</keyword>
<keyword id="KW-0687">Ribonucleoprotein</keyword>
<keyword id="KW-0689">Ribosomal protein</keyword>
<keyword id="KW-0694">RNA-binding</keyword>
<keyword id="KW-0699">rRNA-binding</keyword>
<organism>
    <name type="scientific">Thermus thermophilus (strain ATCC 27634 / DSM 579 / HB8)</name>
    <dbReference type="NCBI Taxonomy" id="300852"/>
    <lineage>
        <taxon>Bacteria</taxon>
        <taxon>Thermotogati</taxon>
        <taxon>Deinococcota</taxon>
        <taxon>Deinococci</taxon>
        <taxon>Thermales</taxon>
        <taxon>Thermaceae</taxon>
        <taxon>Thermus</taxon>
    </lineage>
</organism>
<dbReference type="EMBL" id="AP008226">
    <property type="protein sequence ID" value="BAD71511.1"/>
    <property type="molecule type" value="Genomic_DNA"/>
</dbReference>
<dbReference type="RefSeq" id="WP_011173711.1">
    <property type="nucleotide sequence ID" value="NC_006461.1"/>
</dbReference>
<dbReference type="RefSeq" id="YP_144954.1">
    <property type="nucleotide sequence ID" value="NC_006461.1"/>
</dbReference>
<dbReference type="PDB" id="1FJG">
    <property type="method" value="X-ray"/>
    <property type="resolution" value="3.00 A"/>
    <property type="chains" value="S=1-93"/>
</dbReference>
<dbReference type="PDB" id="1FKA">
    <property type="method" value="X-ray"/>
    <property type="resolution" value="3.30 A"/>
    <property type="chains" value="S=1-93"/>
</dbReference>
<dbReference type="PDB" id="1HNW">
    <property type="method" value="X-ray"/>
    <property type="resolution" value="3.40 A"/>
    <property type="chains" value="S=1-93"/>
</dbReference>
<dbReference type="PDB" id="1HNX">
    <property type="method" value="X-ray"/>
    <property type="resolution" value="3.40 A"/>
    <property type="chains" value="S=1-93"/>
</dbReference>
<dbReference type="PDB" id="1HNZ">
    <property type="method" value="X-ray"/>
    <property type="resolution" value="3.30 A"/>
    <property type="chains" value="S=1-93"/>
</dbReference>
<dbReference type="PDB" id="1HR0">
    <property type="method" value="X-ray"/>
    <property type="resolution" value="3.20 A"/>
    <property type="chains" value="S=1-93"/>
</dbReference>
<dbReference type="PDB" id="1I94">
    <property type="method" value="X-ray"/>
    <property type="resolution" value="3.20 A"/>
    <property type="chains" value="S=2-93"/>
</dbReference>
<dbReference type="PDB" id="1I95">
    <property type="method" value="X-ray"/>
    <property type="resolution" value="4.50 A"/>
    <property type="chains" value="S=2-93"/>
</dbReference>
<dbReference type="PDB" id="1I96">
    <property type="method" value="X-ray"/>
    <property type="resolution" value="4.20 A"/>
    <property type="chains" value="S=2-93"/>
</dbReference>
<dbReference type="PDB" id="1I97">
    <property type="method" value="X-ray"/>
    <property type="resolution" value="4.50 A"/>
    <property type="chains" value="S=2-93"/>
</dbReference>
<dbReference type="PDB" id="1IBK">
    <property type="method" value="X-ray"/>
    <property type="resolution" value="3.31 A"/>
    <property type="chains" value="S=1-93"/>
</dbReference>
<dbReference type="PDB" id="1IBL">
    <property type="method" value="X-ray"/>
    <property type="resolution" value="3.11 A"/>
    <property type="chains" value="S=1-93"/>
</dbReference>
<dbReference type="PDB" id="1IBM">
    <property type="method" value="X-ray"/>
    <property type="resolution" value="3.31 A"/>
    <property type="chains" value="S=1-93"/>
</dbReference>
<dbReference type="PDB" id="1J5E">
    <property type="method" value="X-ray"/>
    <property type="resolution" value="3.05 A"/>
    <property type="chains" value="S=2-93"/>
</dbReference>
<dbReference type="PDB" id="1JGO">
    <property type="method" value="X-ray"/>
    <property type="resolution" value="5.60 A"/>
    <property type="chains" value="V=1-93"/>
</dbReference>
<dbReference type="PDB" id="1JGP">
    <property type="method" value="X-ray"/>
    <property type="resolution" value="7.00 A"/>
    <property type="chains" value="V=1-93"/>
</dbReference>
<dbReference type="PDB" id="1JGQ">
    <property type="method" value="X-ray"/>
    <property type="resolution" value="5.00 A"/>
    <property type="chains" value="V=1-93"/>
</dbReference>
<dbReference type="PDB" id="1ML5">
    <property type="method" value="EM"/>
    <property type="resolution" value="14.00 A"/>
    <property type="chains" value="V=1-93"/>
</dbReference>
<dbReference type="PDB" id="1N32">
    <property type="method" value="X-ray"/>
    <property type="resolution" value="3.00 A"/>
    <property type="chains" value="S=2-93"/>
</dbReference>
<dbReference type="PDB" id="1N33">
    <property type="method" value="X-ray"/>
    <property type="resolution" value="3.35 A"/>
    <property type="chains" value="S=2-93"/>
</dbReference>
<dbReference type="PDB" id="1N34">
    <property type="method" value="X-ray"/>
    <property type="resolution" value="3.80 A"/>
    <property type="chains" value="S=2-93"/>
</dbReference>
<dbReference type="PDB" id="1N36">
    <property type="method" value="X-ray"/>
    <property type="resolution" value="3.65 A"/>
    <property type="chains" value="S=2-93"/>
</dbReference>
<dbReference type="PDB" id="1VVJ">
    <property type="method" value="X-ray"/>
    <property type="resolution" value="3.44 A"/>
    <property type="chains" value="QS/XS=1-93"/>
</dbReference>
<dbReference type="PDB" id="1VY4">
    <property type="method" value="X-ray"/>
    <property type="resolution" value="2.60 A"/>
    <property type="chains" value="AS/CS=1-93"/>
</dbReference>
<dbReference type="PDB" id="1VY5">
    <property type="method" value="X-ray"/>
    <property type="resolution" value="2.55 A"/>
    <property type="chains" value="AS/CS=1-93"/>
</dbReference>
<dbReference type="PDB" id="1VY6">
    <property type="method" value="X-ray"/>
    <property type="resolution" value="2.90 A"/>
    <property type="chains" value="AS/CS=1-93"/>
</dbReference>
<dbReference type="PDB" id="1VY7">
    <property type="method" value="X-ray"/>
    <property type="resolution" value="2.80 A"/>
    <property type="chains" value="AS/CS=1-93"/>
</dbReference>
<dbReference type="PDB" id="1XMO">
    <property type="method" value="X-ray"/>
    <property type="resolution" value="3.25 A"/>
    <property type="chains" value="S=1-93"/>
</dbReference>
<dbReference type="PDB" id="1XMQ">
    <property type="method" value="X-ray"/>
    <property type="resolution" value="3.00 A"/>
    <property type="chains" value="S=1-93"/>
</dbReference>
<dbReference type="PDB" id="1XNQ">
    <property type="method" value="X-ray"/>
    <property type="resolution" value="3.05 A"/>
    <property type="chains" value="S=1-93"/>
</dbReference>
<dbReference type="PDB" id="1XNR">
    <property type="method" value="X-ray"/>
    <property type="resolution" value="3.10 A"/>
    <property type="chains" value="S=1-93"/>
</dbReference>
<dbReference type="PDB" id="2E5L">
    <property type="method" value="X-ray"/>
    <property type="resolution" value="3.30 A"/>
    <property type="chains" value="S=2-93"/>
</dbReference>
<dbReference type="PDB" id="2F4V">
    <property type="method" value="X-ray"/>
    <property type="resolution" value="3.80 A"/>
    <property type="chains" value="S=1-93"/>
</dbReference>
<dbReference type="PDB" id="2HHH">
    <property type="method" value="X-ray"/>
    <property type="resolution" value="3.35 A"/>
    <property type="chains" value="S=1-93"/>
</dbReference>
<dbReference type="PDB" id="2UU9">
    <property type="method" value="X-ray"/>
    <property type="resolution" value="3.10 A"/>
    <property type="chains" value="S=2-93"/>
</dbReference>
<dbReference type="PDB" id="2UUA">
    <property type="method" value="X-ray"/>
    <property type="resolution" value="2.90 A"/>
    <property type="chains" value="S=2-93"/>
</dbReference>
<dbReference type="PDB" id="2UUB">
    <property type="method" value="X-ray"/>
    <property type="resolution" value="2.80 A"/>
    <property type="chains" value="S=2-93"/>
</dbReference>
<dbReference type="PDB" id="2UUC">
    <property type="method" value="X-ray"/>
    <property type="resolution" value="3.10 A"/>
    <property type="chains" value="S=2-93"/>
</dbReference>
<dbReference type="PDB" id="2UXB">
    <property type="method" value="X-ray"/>
    <property type="resolution" value="3.10 A"/>
    <property type="chains" value="S=2-93"/>
</dbReference>
<dbReference type="PDB" id="2UXC">
    <property type="method" value="X-ray"/>
    <property type="resolution" value="2.90 A"/>
    <property type="chains" value="S=2-93"/>
</dbReference>
<dbReference type="PDB" id="2UXD">
    <property type="method" value="X-ray"/>
    <property type="resolution" value="3.20 A"/>
    <property type="chains" value="S=2-93"/>
</dbReference>
<dbReference type="PDB" id="2VQE">
    <property type="method" value="X-ray"/>
    <property type="resolution" value="2.50 A"/>
    <property type="chains" value="S=1-93"/>
</dbReference>
<dbReference type="PDB" id="2VQF">
    <property type="method" value="X-ray"/>
    <property type="resolution" value="2.90 A"/>
    <property type="chains" value="S=1-93"/>
</dbReference>
<dbReference type="PDB" id="2ZM6">
    <property type="method" value="X-ray"/>
    <property type="resolution" value="3.30 A"/>
    <property type="chains" value="S=2-93"/>
</dbReference>
<dbReference type="PDB" id="3A1P">
    <property type="method" value="X-ray"/>
    <property type="resolution" value="2.30 A"/>
    <property type="chains" value="B/D=1-93"/>
</dbReference>
<dbReference type="PDB" id="3OTO">
    <property type="method" value="X-ray"/>
    <property type="resolution" value="3.69 A"/>
    <property type="chains" value="S=1-93"/>
</dbReference>
<dbReference type="PDB" id="3T1H">
    <property type="method" value="X-ray"/>
    <property type="resolution" value="3.11 A"/>
    <property type="chains" value="S=1-93"/>
</dbReference>
<dbReference type="PDB" id="3T1Y">
    <property type="method" value="X-ray"/>
    <property type="resolution" value="2.80 A"/>
    <property type="chains" value="S=1-93"/>
</dbReference>
<dbReference type="PDB" id="4AQY">
    <property type="method" value="X-ray"/>
    <property type="resolution" value="3.50 A"/>
    <property type="chains" value="S=2-93"/>
</dbReference>
<dbReference type="PDB" id="4B3M">
    <property type="method" value="X-ray"/>
    <property type="resolution" value="2.90 A"/>
    <property type="chains" value="S=2-93"/>
</dbReference>
<dbReference type="PDB" id="4B3R">
    <property type="method" value="X-ray"/>
    <property type="resolution" value="3.00 A"/>
    <property type="chains" value="S=2-93"/>
</dbReference>
<dbReference type="PDB" id="4B3S">
    <property type="method" value="X-ray"/>
    <property type="resolution" value="3.15 A"/>
    <property type="chains" value="S=2-93"/>
</dbReference>
<dbReference type="PDB" id="4B3T">
    <property type="method" value="X-ray"/>
    <property type="resolution" value="3.00 A"/>
    <property type="chains" value="S=2-93"/>
</dbReference>
<dbReference type="PDB" id="4DR1">
    <property type="method" value="X-ray"/>
    <property type="resolution" value="3.60 A"/>
    <property type="chains" value="S=1-93"/>
</dbReference>
<dbReference type="PDB" id="4DR2">
    <property type="method" value="X-ray"/>
    <property type="resolution" value="3.25 A"/>
    <property type="chains" value="S=1-93"/>
</dbReference>
<dbReference type="PDB" id="4DR3">
    <property type="method" value="X-ray"/>
    <property type="resolution" value="3.35 A"/>
    <property type="chains" value="S=1-93"/>
</dbReference>
<dbReference type="PDB" id="4DR4">
    <property type="method" value="X-ray"/>
    <property type="resolution" value="3.97 A"/>
    <property type="chains" value="S=1-93"/>
</dbReference>
<dbReference type="PDB" id="4DR5">
    <property type="method" value="X-ray"/>
    <property type="resolution" value="3.45 A"/>
    <property type="chains" value="S=1-93"/>
</dbReference>
<dbReference type="PDB" id="4DR6">
    <property type="method" value="X-ray"/>
    <property type="resolution" value="3.30 A"/>
    <property type="chains" value="S=1-93"/>
</dbReference>
<dbReference type="PDB" id="4DR7">
    <property type="method" value="X-ray"/>
    <property type="resolution" value="3.75 A"/>
    <property type="chains" value="S=1-93"/>
</dbReference>
<dbReference type="PDB" id="4DUY">
    <property type="method" value="X-ray"/>
    <property type="resolution" value="3.39 A"/>
    <property type="chains" value="S=1-93"/>
</dbReference>
<dbReference type="PDB" id="4DUZ">
    <property type="method" value="X-ray"/>
    <property type="resolution" value="3.65 A"/>
    <property type="chains" value="S=1-93"/>
</dbReference>
<dbReference type="PDB" id="4DV0">
    <property type="method" value="X-ray"/>
    <property type="resolution" value="3.85 A"/>
    <property type="chains" value="S=1-93"/>
</dbReference>
<dbReference type="PDB" id="4DV1">
    <property type="method" value="X-ray"/>
    <property type="resolution" value="3.85 A"/>
    <property type="chains" value="S=1-93"/>
</dbReference>
<dbReference type="PDB" id="4DV2">
    <property type="method" value="X-ray"/>
    <property type="resolution" value="3.65 A"/>
    <property type="chains" value="S=1-93"/>
</dbReference>
<dbReference type="PDB" id="4DV3">
    <property type="method" value="X-ray"/>
    <property type="resolution" value="3.55 A"/>
    <property type="chains" value="S=1-93"/>
</dbReference>
<dbReference type="PDB" id="4DV4">
    <property type="method" value="X-ray"/>
    <property type="resolution" value="3.65 A"/>
    <property type="chains" value="S=1-93"/>
</dbReference>
<dbReference type="PDB" id="4DV5">
    <property type="method" value="X-ray"/>
    <property type="resolution" value="3.68 A"/>
    <property type="chains" value="S=1-93"/>
</dbReference>
<dbReference type="PDB" id="4DV6">
    <property type="method" value="X-ray"/>
    <property type="resolution" value="3.30 A"/>
    <property type="chains" value="S=1-93"/>
</dbReference>
<dbReference type="PDB" id="4DV7">
    <property type="method" value="X-ray"/>
    <property type="resolution" value="3.29 A"/>
    <property type="chains" value="S=1-93"/>
</dbReference>
<dbReference type="PDB" id="4GKJ">
    <property type="method" value="X-ray"/>
    <property type="resolution" value="3.30 A"/>
    <property type="chains" value="S=2-81"/>
</dbReference>
<dbReference type="PDB" id="4GKK">
    <property type="method" value="X-ray"/>
    <property type="resolution" value="3.20 A"/>
    <property type="chains" value="S=2-81"/>
</dbReference>
<dbReference type="PDB" id="4JI0">
    <property type="method" value="X-ray"/>
    <property type="resolution" value="3.49 A"/>
    <property type="chains" value="S=1-93"/>
</dbReference>
<dbReference type="PDB" id="4JI1">
    <property type="method" value="X-ray"/>
    <property type="resolution" value="3.14 A"/>
    <property type="chains" value="S=1-93"/>
</dbReference>
<dbReference type="PDB" id="4JI2">
    <property type="method" value="X-ray"/>
    <property type="resolution" value="3.64 A"/>
    <property type="chains" value="S=1-93"/>
</dbReference>
<dbReference type="PDB" id="4JI3">
    <property type="method" value="X-ray"/>
    <property type="resolution" value="3.35 A"/>
    <property type="chains" value="S=1-93"/>
</dbReference>
<dbReference type="PDB" id="4JI4">
    <property type="method" value="X-ray"/>
    <property type="resolution" value="3.69 A"/>
    <property type="chains" value="S=1-93"/>
</dbReference>
<dbReference type="PDB" id="4JI5">
    <property type="method" value="X-ray"/>
    <property type="resolution" value="3.85 A"/>
    <property type="chains" value="S=1-93"/>
</dbReference>
<dbReference type="PDB" id="4JI6">
    <property type="method" value="X-ray"/>
    <property type="resolution" value="3.55 A"/>
    <property type="chains" value="S=1-93"/>
</dbReference>
<dbReference type="PDB" id="4JI7">
    <property type="method" value="X-ray"/>
    <property type="resolution" value="3.50 A"/>
    <property type="chains" value="S=1-93"/>
</dbReference>
<dbReference type="PDB" id="4JI8">
    <property type="method" value="X-ray"/>
    <property type="resolution" value="3.74 A"/>
    <property type="chains" value="S=1-93"/>
</dbReference>
<dbReference type="PDB" id="4JV5">
    <property type="method" value="X-ray"/>
    <property type="resolution" value="3.16 A"/>
    <property type="chains" value="S=4-81"/>
</dbReference>
<dbReference type="PDB" id="4JYA">
    <property type="method" value="X-ray"/>
    <property type="resolution" value="3.10 A"/>
    <property type="chains" value="S=4-81"/>
</dbReference>
<dbReference type="PDB" id="4K0K">
    <property type="method" value="X-ray"/>
    <property type="resolution" value="3.40 A"/>
    <property type="chains" value="S=4-82"/>
</dbReference>
<dbReference type="PDB" id="4KHP">
    <property type="method" value="X-ray"/>
    <property type="resolution" value="3.10 A"/>
    <property type="chains" value="S=4-81"/>
</dbReference>
<dbReference type="PDB" id="4L47">
    <property type="method" value="X-ray"/>
    <property type="resolution" value="3.22 A"/>
    <property type="chains" value="QS/XS=1-93"/>
</dbReference>
<dbReference type="PDB" id="4L71">
    <property type="method" value="X-ray"/>
    <property type="resolution" value="3.90 A"/>
    <property type="chains" value="QS/XS=1-93"/>
</dbReference>
<dbReference type="PDB" id="4LEL">
    <property type="method" value="X-ray"/>
    <property type="resolution" value="3.90 A"/>
    <property type="chains" value="QS/XS=1-93"/>
</dbReference>
<dbReference type="PDB" id="4LF4">
    <property type="method" value="X-ray"/>
    <property type="resolution" value="3.34 A"/>
    <property type="chains" value="S=1-93"/>
</dbReference>
<dbReference type="PDB" id="4LF5">
    <property type="method" value="X-ray"/>
    <property type="resolution" value="3.75 A"/>
    <property type="chains" value="S=1-93"/>
</dbReference>
<dbReference type="PDB" id="4LF6">
    <property type="method" value="X-ray"/>
    <property type="resolution" value="3.31 A"/>
    <property type="chains" value="S=1-93"/>
</dbReference>
<dbReference type="PDB" id="4LF7">
    <property type="method" value="X-ray"/>
    <property type="resolution" value="3.15 A"/>
    <property type="chains" value="S=1-93"/>
</dbReference>
<dbReference type="PDB" id="4LF8">
    <property type="method" value="X-ray"/>
    <property type="resolution" value="3.15 A"/>
    <property type="chains" value="S=1-93"/>
</dbReference>
<dbReference type="PDB" id="4LF9">
    <property type="method" value="X-ray"/>
    <property type="resolution" value="3.28 A"/>
    <property type="chains" value="S=1-93"/>
</dbReference>
<dbReference type="PDB" id="4LFA">
    <property type="method" value="X-ray"/>
    <property type="resolution" value="3.65 A"/>
    <property type="chains" value="S=1-93"/>
</dbReference>
<dbReference type="PDB" id="4LFB">
    <property type="method" value="X-ray"/>
    <property type="resolution" value="3.01 A"/>
    <property type="chains" value="S=1-93"/>
</dbReference>
<dbReference type="PDB" id="4LFC">
    <property type="method" value="X-ray"/>
    <property type="resolution" value="3.60 A"/>
    <property type="chains" value="S=1-93"/>
</dbReference>
<dbReference type="PDB" id="4LFZ">
    <property type="method" value="X-ray"/>
    <property type="resolution" value="3.92 A"/>
    <property type="chains" value="QS/XS=1-93"/>
</dbReference>
<dbReference type="PDB" id="4LNT">
    <property type="method" value="X-ray"/>
    <property type="resolution" value="2.94 A"/>
    <property type="chains" value="QS/XS=1-93"/>
</dbReference>
<dbReference type="PDB" id="4LSK">
    <property type="method" value="X-ray"/>
    <property type="resolution" value="3.48 A"/>
    <property type="chains" value="QS/XS=1-93"/>
</dbReference>
<dbReference type="PDB" id="4LT8">
    <property type="method" value="X-ray"/>
    <property type="resolution" value="3.14 A"/>
    <property type="chains" value="QS/XS=1-93"/>
</dbReference>
<dbReference type="PDB" id="4NXM">
    <property type="method" value="X-ray"/>
    <property type="resolution" value="3.65 A"/>
    <property type="chains" value="S=1-93"/>
</dbReference>
<dbReference type="PDB" id="4NXN">
    <property type="method" value="X-ray"/>
    <property type="resolution" value="3.54 A"/>
    <property type="chains" value="S=1-93"/>
</dbReference>
<dbReference type="PDB" id="4OX9">
    <property type="method" value="X-ray"/>
    <property type="resolution" value="3.80 A"/>
    <property type="chains" value="S=2-93"/>
</dbReference>
<dbReference type="PDB" id="4P6F">
    <property type="method" value="X-ray"/>
    <property type="resolution" value="3.60 A"/>
    <property type="chains" value="QS/XS=1-93"/>
</dbReference>
<dbReference type="PDB" id="4P70">
    <property type="method" value="X-ray"/>
    <property type="resolution" value="3.68 A"/>
    <property type="chains" value="QS/XS=1-93"/>
</dbReference>
<dbReference type="PDB" id="4TUA">
    <property type="method" value="X-ray"/>
    <property type="resolution" value="3.60 A"/>
    <property type="chains" value="QS/XS=1-93"/>
</dbReference>
<dbReference type="PDB" id="4TUB">
    <property type="method" value="X-ray"/>
    <property type="resolution" value="3.60 A"/>
    <property type="chains" value="QS/XS=1-93"/>
</dbReference>
<dbReference type="PDB" id="4TUC">
    <property type="method" value="X-ray"/>
    <property type="resolution" value="3.60 A"/>
    <property type="chains" value="QS/XS=1-93"/>
</dbReference>
<dbReference type="PDB" id="4TUD">
    <property type="method" value="X-ray"/>
    <property type="resolution" value="3.60 A"/>
    <property type="chains" value="QS/XS=1-93"/>
</dbReference>
<dbReference type="PDB" id="4TUE">
    <property type="method" value="X-ray"/>
    <property type="resolution" value="3.50 A"/>
    <property type="chains" value="QS/XS=1-93"/>
</dbReference>
<dbReference type="PDB" id="4V42">
    <property type="method" value="X-ray"/>
    <property type="resolution" value="5.50 A"/>
    <property type="chains" value="AV=1-93"/>
</dbReference>
<dbReference type="PDB" id="4V49">
    <property type="method" value="X-ray"/>
    <property type="resolution" value="8.70 A"/>
    <property type="chains" value="S=2-81"/>
</dbReference>
<dbReference type="PDB" id="4V4A">
    <property type="method" value="X-ray"/>
    <property type="resolution" value="9.50 A"/>
    <property type="chains" value="S=2-81"/>
</dbReference>
<dbReference type="PDB" id="4V4I">
    <property type="method" value="X-ray"/>
    <property type="resolution" value="3.71 A"/>
    <property type="chains" value="t=1-93"/>
</dbReference>
<dbReference type="PDB" id="4V4P">
    <property type="method" value="X-ray"/>
    <property type="resolution" value="5.50 A"/>
    <property type="chains" value="BV=1-93"/>
</dbReference>
<dbReference type="PDB" id="4V4R">
    <property type="method" value="X-ray"/>
    <property type="resolution" value="5.90 A"/>
    <property type="chains" value="AS=1-93"/>
</dbReference>
<dbReference type="PDB" id="4V4S">
    <property type="method" value="X-ray"/>
    <property type="resolution" value="6.76 A"/>
    <property type="chains" value="AS=1-93"/>
</dbReference>
<dbReference type="PDB" id="4V4T">
    <property type="method" value="X-ray"/>
    <property type="resolution" value="6.46 A"/>
    <property type="chains" value="AS=1-93"/>
</dbReference>
<dbReference type="PDB" id="4V4X">
    <property type="method" value="X-ray"/>
    <property type="resolution" value="5.00 A"/>
    <property type="chains" value="AV=1-93"/>
</dbReference>
<dbReference type="PDB" id="4V4Y">
    <property type="method" value="X-ray"/>
    <property type="resolution" value="5.50 A"/>
    <property type="chains" value="AV=1-93"/>
</dbReference>
<dbReference type="PDB" id="4V4Z">
    <property type="method" value="X-ray"/>
    <property type="resolution" value="4.51 A"/>
    <property type="chains" value="AV=1-93"/>
</dbReference>
<dbReference type="PDB" id="4V51">
    <property type="method" value="X-ray"/>
    <property type="resolution" value="2.80 A"/>
    <property type="chains" value="AS/CS=2-93"/>
</dbReference>
<dbReference type="PDB" id="4V5A">
    <property type="method" value="X-ray"/>
    <property type="resolution" value="3.50 A"/>
    <property type="chains" value="AS/CS=2-93"/>
</dbReference>
<dbReference type="PDB" id="4V5C">
    <property type="method" value="X-ray"/>
    <property type="resolution" value="3.30 A"/>
    <property type="chains" value="AS/CS=1-93"/>
</dbReference>
<dbReference type="PDB" id="4V5D">
    <property type="method" value="X-ray"/>
    <property type="resolution" value="3.50 A"/>
    <property type="chains" value="AS/CS=1-93"/>
</dbReference>
<dbReference type="PDB" id="4V5E">
    <property type="method" value="X-ray"/>
    <property type="resolution" value="3.45 A"/>
    <property type="chains" value="AS/CS=1-93"/>
</dbReference>
<dbReference type="PDB" id="4V5F">
    <property type="method" value="X-ray"/>
    <property type="resolution" value="3.60 A"/>
    <property type="chains" value="AS/CS=1-93"/>
</dbReference>
<dbReference type="PDB" id="4V5G">
    <property type="method" value="X-ray"/>
    <property type="resolution" value="3.60 A"/>
    <property type="chains" value="AS/CS=1-93"/>
</dbReference>
<dbReference type="PDB" id="4V5J">
    <property type="method" value="X-ray"/>
    <property type="resolution" value="3.10 A"/>
    <property type="chains" value="AS/CS=1-93"/>
</dbReference>
<dbReference type="PDB" id="4V5K">
    <property type="method" value="X-ray"/>
    <property type="resolution" value="3.20 A"/>
    <property type="chains" value="AS/CS=1-93"/>
</dbReference>
<dbReference type="PDB" id="4V5L">
    <property type="method" value="X-ray"/>
    <property type="resolution" value="3.10 A"/>
    <property type="chains" value="AS=1-93"/>
</dbReference>
<dbReference type="PDB" id="4V5M">
    <property type="method" value="EM"/>
    <property type="resolution" value="7.80 A"/>
    <property type="chains" value="AS=1-93"/>
</dbReference>
<dbReference type="PDB" id="4V5N">
    <property type="method" value="EM"/>
    <property type="resolution" value="7.60 A"/>
    <property type="chains" value="AS=1-93"/>
</dbReference>
<dbReference type="PDB" id="4V5P">
    <property type="method" value="X-ray"/>
    <property type="resolution" value="3.10 A"/>
    <property type="chains" value="AS/CS=1-93"/>
</dbReference>
<dbReference type="PDB" id="4V5Q">
    <property type="method" value="X-ray"/>
    <property type="resolution" value="3.10 A"/>
    <property type="chains" value="AS/CS=1-93"/>
</dbReference>
<dbReference type="PDB" id="4V5R">
    <property type="method" value="X-ray"/>
    <property type="resolution" value="3.10 A"/>
    <property type="chains" value="AS/CS=1-93"/>
</dbReference>
<dbReference type="PDB" id="4V5S">
    <property type="method" value="X-ray"/>
    <property type="resolution" value="3.10 A"/>
    <property type="chains" value="AS/CS=1-93"/>
</dbReference>
<dbReference type="PDB" id="4V68">
    <property type="method" value="EM"/>
    <property type="resolution" value="6.40 A"/>
    <property type="chains" value="AS=4-82"/>
</dbReference>
<dbReference type="PDB" id="4V6A">
    <property type="method" value="X-ray"/>
    <property type="resolution" value="3.10 A"/>
    <property type="chains" value="AS/CS=1-93"/>
</dbReference>
<dbReference type="PDB" id="4V6F">
    <property type="method" value="X-ray"/>
    <property type="resolution" value="3.10 A"/>
    <property type="chains" value="BV/CV=1-93"/>
</dbReference>
<dbReference type="PDB" id="4V6G">
    <property type="method" value="X-ray"/>
    <property type="resolution" value="3.50 A"/>
    <property type="chains" value="AV/CV=1-93"/>
</dbReference>
<dbReference type="PDB" id="4V7J">
    <property type="method" value="X-ray"/>
    <property type="resolution" value="3.30 A"/>
    <property type="chains" value="As/Bs=1-93"/>
</dbReference>
<dbReference type="PDB" id="4V7K">
    <property type="method" value="X-ray"/>
    <property type="resolution" value="3.60 A"/>
    <property type="chains" value="As/Bs=1-93"/>
</dbReference>
<dbReference type="PDB" id="4V7L">
    <property type="method" value="X-ray"/>
    <property type="resolution" value="3.00 A"/>
    <property type="chains" value="AS/CS=1-93"/>
</dbReference>
<dbReference type="PDB" id="4V7M">
    <property type="method" value="X-ray"/>
    <property type="resolution" value="3.45 A"/>
    <property type="chains" value="AS/CS=1-93"/>
</dbReference>
<dbReference type="PDB" id="4V7W">
    <property type="method" value="X-ray"/>
    <property type="resolution" value="3.00 A"/>
    <property type="chains" value="AS/CS=1-93"/>
</dbReference>
<dbReference type="PDB" id="4V7X">
    <property type="method" value="X-ray"/>
    <property type="resolution" value="3.00 A"/>
    <property type="chains" value="AS/CS=1-93"/>
</dbReference>
<dbReference type="PDB" id="4V7Y">
    <property type="method" value="X-ray"/>
    <property type="resolution" value="3.00 A"/>
    <property type="chains" value="AS/CS=1-93"/>
</dbReference>
<dbReference type="PDB" id="4V7Z">
    <property type="method" value="X-ray"/>
    <property type="resolution" value="3.10 A"/>
    <property type="chains" value="AS/CS=1-93"/>
</dbReference>
<dbReference type="PDB" id="4V87">
    <property type="method" value="X-ray"/>
    <property type="resolution" value="3.10 A"/>
    <property type="chains" value="BV/CV=1-93"/>
</dbReference>
<dbReference type="PDB" id="4V8A">
    <property type="method" value="X-ray"/>
    <property type="resolution" value="3.20 A"/>
    <property type="chains" value="CS/DS=1-93"/>
</dbReference>
<dbReference type="PDB" id="4V8B">
    <property type="method" value="X-ray"/>
    <property type="resolution" value="3.00 A"/>
    <property type="chains" value="AV/CV=1-93"/>
</dbReference>
<dbReference type="PDB" id="4V8C">
    <property type="method" value="X-ray"/>
    <property type="resolution" value="3.30 A"/>
    <property type="chains" value="CV/DV=1-93"/>
</dbReference>
<dbReference type="PDB" id="4V8D">
    <property type="method" value="X-ray"/>
    <property type="resolution" value="3.00 A"/>
    <property type="chains" value="AV/CV=1-93"/>
</dbReference>
<dbReference type="PDB" id="4V8E">
    <property type="method" value="X-ray"/>
    <property type="resolution" value="3.30 A"/>
    <property type="chains" value="BV/DV=1-93"/>
</dbReference>
<dbReference type="PDB" id="4V8F">
    <property type="method" value="X-ray"/>
    <property type="resolution" value="3.30 A"/>
    <property type="chains" value="BV/CV=1-93"/>
</dbReference>
<dbReference type="PDB" id="4V8G">
    <property type="method" value="X-ray"/>
    <property type="resolution" value="3.00 A"/>
    <property type="chains" value="AS/CS=1-93"/>
</dbReference>
<dbReference type="PDB" id="4V8H">
    <property type="method" value="X-ray"/>
    <property type="resolution" value="3.10 A"/>
    <property type="chains" value="AS/CS=1-93"/>
</dbReference>
<dbReference type="PDB" id="4V8I">
    <property type="method" value="X-ray"/>
    <property type="resolution" value="2.70 A"/>
    <property type="chains" value="AS/CS=1-93"/>
</dbReference>
<dbReference type="PDB" id="4V8J">
    <property type="method" value="X-ray"/>
    <property type="resolution" value="3.90 A"/>
    <property type="chains" value="AS/CS=1-93"/>
</dbReference>
<dbReference type="PDB" id="4V8N">
    <property type="method" value="X-ray"/>
    <property type="resolution" value="3.10 A"/>
    <property type="chains" value="AS/CS=1-93"/>
</dbReference>
<dbReference type="PDB" id="4V8O">
    <property type="method" value="X-ray"/>
    <property type="resolution" value="3.80 A"/>
    <property type="chains" value="AS=1-93"/>
</dbReference>
<dbReference type="PDB" id="4V8Q">
    <property type="method" value="X-ray"/>
    <property type="resolution" value="3.10 A"/>
    <property type="chains" value="BS=1-93"/>
</dbReference>
<dbReference type="PDB" id="4V8U">
    <property type="method" value="X-ray"/>
    <property type="resolution" value="3.70 A"/>
    <property type="chains" value="AS/CS=1-93"/>
</dbReference>
<dbReference type="PDB" id="4V8X">
    <property type="method" value="X-ray"/>
    <property type="resolution" value="3.35 A"/>
    <property type="chains" value="AS/CS=1-93"/>
</dbReference>
<dbReference type="PDB" id="4V90">
    <property type="method" value="X-ray"/>
    <property type="resolution" value="2.95 A"/>
    <property type="chains" value="AS=1-93"/>
</dbReference>
<dbReference type="PDB" id="4V95">
    <property type="method" value="X-ray"/>
    <property type="resolution" value="3.20 A"/>
    <property type="chains" value="AS/CS=1-93"/>
</dbReference>
<dbReference type="PDB" id="4V97">
    <property type="method" value="X-ray"/>
    <property type="resolution" value="3.52 A"/>
    <property type="chains" value="AS/CS=1-93"/>
</dbReference>
<dbReference type="PDB" id="4V9A">
    <property type="method" value="X-ray"/>
    <property type="resolution" value="3.30 A"/>
    <property type="chains" value="AV/CV=1-93"/>
</dbReference>
<dbReference type="PDB" id="4V9B">
    <property type="method" value="X-ray"/>
    <property type="resolution" value="3.10 A"/>
    <property type="chains" value="AV/CV=1-93"/>
</dbReference>
<dbReference type="PDB" id="4V9H">
    <property type="method" value="X-ray"/>
    <property type="resolution" value="2.86 A"/>
    <property type="chains" value="AS=4-81"/>
</dbReference>
<dbReference type="PDB" id="4V9I">
    <property type="method" value="X-ray"/>
    <property type="resolution" value="3.30 A"/>
    <property type="chains" value="AS/CS=4-81"/>
</dbReference>
<dbReference type="PDB" id="4V9R">
    <property type="method" value="X-ray"/>
    <property type="resolution" value="3.00 A"/>
    <property type="chains" value="AS/CS=1-93"/>
</dbReference>
<dbReference type="PDB" id="4V9S">
    <property type="method" value="X-ray"/>
    <property type="resolution" value="3.10 A"/>
    <property type="chains" value="AS/CS=1-93"/>
</dbReference>
<dbReference type="PDB" id="4W2E">
    <property type="method" value="X-ray"/>
    <property type="resolution" value="2.90 A"/>
    <property type="chains" value="s=1-93"/>
</dbReference>
<dbReference type="PDB" id="4W2F">
    <property type="method" value="X-ray"/>
    <property type="resolution" value="2.40 A"/>
    <property type="chains" value="AS/CS=1-93"/>
</dbReference>
<dbReference type="PDB" id="4W2G">
    <property type="method" value="X-ray"/>
    <property type="resolution" value="2.55 A"/>
    <property type="chains" value="AS/CS=1-93"/>
</dbReference>
<dbReference type="PDB" id="4W2H">
    <property type="method" value="X-ray"/>
    <property type="resolution" value="2.70 A"/>
    <property type="chains" value="AS/CS=1-93"/>
</dbReference>
<dbReference type="PDB" id="4W2I">
    <property type="method" value="X-ray"/>
    <property type="resolution" value="2.70 A"/>
    <property type="chains" value="AS/CS=1-93"/>
</dbReference>
<dbReference type="PDB" id="4W4G">
    <property type="method" value="X-ray"/>
    <property type="resolution" value="3.30 A"/>
    <property type="chains" value="QS/XS=1-93"/>
</dbReference>
<dbReference type="PDB" id="4WPO">
    <property type="method" value="X-ray"/>
    <property type="resolution" value="2.80 A"/>
    <property type="chains" value="BS/DS=1-93"/>
</dbReference>
<dbReference type="PDB" id="4WQ1">
    <property type="method" value="X-ray"/>
    <property type="resolution" value="3.10 A"/>
    <property type="chains" value="AA/AI=1-93"/>
</dbReference>
<dbReference type="PDB" id="4WQF">
    <property type="method" value="X-ray"/>
    <property type="resolution" value="2.80 A"/>
    <property type="chains" value="BS/DS=1-93"/>
</dbReference>
<dbReference type="PDB" id="4WQR">
    <property type="method" value="X-ray"/>
    <property type="resolution" value="3.15 A"/>
    <property type="chains" value="AA/AI=1-93"/>
</dbReference>
<dbReference type="PDB" id="4WQU">
    <property type="method" value="X-ray"/>
    <property type="resolution" value="2.80 A"/>
    <property type="chains" value="BS/DS=1-93"/>
</dbReference>
<dbReference type="PDB" id="4WQY">
    <property type="method" value="X-ray"/>
    <property type="resolution" value="2.80 A"/>
    <property type="chains" value="BS/DS=1-93"/>
</dbReference>
<dbReference type="PDB" id="4WR6">
    <property type="method" value="X-ray"/>
    <property type="resolution" value="3.05 A"/>
    <property type="chains" value="AA/AI=1-93"/>
</dbReference>
<dbReference type="PDB" id="4WRA">
    <property type="method" value="X-ray"/>
    <property type="resolution" value="3.05 A"/>
    <property type="chains" value="AA/AI=1-93"/>
</dbReference>
<dbReference type="PDB" id="4WRO">
    <property type="method" value="X-ray"/>
    <property type="resolution" value="3.05 A"/>
    <property type="chains" value="AI=1-93"/>
</dbReference>
<dbReference type="PDB" id="4WSD">
    <property type="method" value="X-ray"/>
    <property type="resolution" value="2.95 A"/>
    <property type="chains" value="AA/AI=1-93"/>
</dbReference>
<dbReference type="PDB" id="4WSM">
    <property type="method" value="X-ray"/>
    <property type="resolution" value="3.30 A"/>
    <property type="chains" value="AA/AI=1-93"/>
</dbReference>
<dbReference type="PDB" id="4WT1">
    <property type="method" value="X-ray"/>
    <property type="resolution" value="3.05 A"/>
    <property type="chains" value="AA/AI=1-93"/>
</dbReference>
<dbReference type="PDB" id="4WT8">
    <property type="method" value="X-ray"/>
    <property type="resolution" value="3.40 A"/>
    <property type="chains" value="AT/BT=4-81"/>
</dbReference>
<dbReference type="PDB" id="4WU1">
    <property type="method" value="X-ray"/>
    <property type="resolution" value="3.20 A"/>
    <property type="chains" value="AA/AI=1-93"/>
</dbReference>
<dbReference type="PDB" id="4WZD">
    <property type="method" value="X-ray"/>
    <property type="resolution" value="3.10 A"/>
    <property type="chains" value="AA/AI=1-93"/>
</dbReference>
<dbReference type="PDB" id="4WZO">
    <property type="method" value="X-ray"/>
    <property type="resolution" value="3.30 A"/>
    <property type="chains" value="AA/AI=1-93"/>
</dbReference>
<dbReference type="PDB" id="4X62">
    <property type="method" value="X-ray"/>
    <property type="resolution" value="3.45 A"/>
    <property type="chains" value="S=2-82"/>
</dbReference>
<dbReference type="PDB" id="4X64">
    <property type="method" value="X-ray"/>
    <property type="resolution" value="3.35 A"/>
    <property type="chains" value="S=2-82"/>
</dbReference>
<dbReference type="PDB" id="4X65">
    <property type="method" value="X-ray"/>
    <property type="resolution" value="3.35 A"/>
    <property type="chains" value="S=2-82"/>
</dbReference>
<dbReference type="PDB" id="4X66">
    <property type="method" value="X-ray"/>
    <property type="resolution" value="3.45 A"/>
    <property type="chains" value="S=2-82"/>
</dbReference>
<dbReference type="PDB" id="4Y4O">
    <property type="method" value="X-ray"/>
    <property type="resolution" value="2.30 A"/>
    <property type="chains" value="1s/2s=1-93"/>
</dbReference>
<dbReference type="PDB" id="4Y4P">
    <property type="method" value="X-ray"/>
    <property type="resolution" value="2.50 A"/>
    <property type="chains" value="1s/2s=1-93"/>
</dbReference>
<dbReference type="PDB" id="4YHH">
    <property type="method" value="X-ray"/>
    <property type="resolution" value="3.42 A"/>
    <property type="chains" value="S=2-84"/>
</dbReference>
<dbReference type="PDB" id="4YPB">
    <property type="method" value="X-ray"/>
    <property type="resolution" value="3.40 A"/>
    <property type="chains" value="QS/XS=1-93"/>
</dbReference>
<dbReference type="PDB" id="4YY3">
    <property type="method" value="X-ray"/>
    <property type="resolution" value="3.60 A"/>
    <property type="chains" value="S=1-93"/>
</dbReference>
<dbReference type="PDB" id="4YZV">
    <property type="method" value="X-ray"/>
    <property type="resolution" value="3.10 A"/>
    <property type="chains" value="QS/XS=1-93"/>
</dbReference>
<dbReference type="PDB" id="4Z3S">
    <property type="method" value="X-ray"/>
    <property type="resolution" value="2.65 A"/>
    <property type="chains" value="1s/2s=1-93"/>
</dbReference>
<dbReference type="PDB" id="4Z8C">
    <property type="method" value="X-ray"/>
    <property type="resolution" value="2.90 A"/>
    <property type="chains" value="1s/2s=1-93"/>
</dbReference>
<dbReference type="PDB" id="4ZER">
    <property type="method" value="X-ray"/>
    <property type="resolution" value="3.10 A"/>
    <property type="chains" value="1s/2s=2-84"/>
</dbReference>
<dbReference type="PDB" id="4ZSN">
    <property type="method" value="X-ray"/>
    <property type="resolution" value="3.60 A"/>
    <property type="chains" value="QS/XS=1-93"/>
</dbReference>
<dbReference type="PDB" id="5A9Z">
    <property type="method" value="EM"/>
    <property type="resolution" value="4.70 A"/>
    <property type="chains" value="BW=2-81"/>
</dbReference>
<dbReference type="PDB" id="5AA0">
    <property type="method" value="EM"/>
    <property type="resolution" value="5.00 A"/>
    <property type="chains" value="BW=2-81"/>
</dbReference>
<dbReference type="PDB" id="5BR8">
    <property type="method" value="X-ray"/>
    <property type="resolution" value="3.40 A"/>
    <property type="chains" value="S=1-93"/>
</dbReference>
<dbReference type="PDB" id="5CZP">
    <property type="method" value="X-ray"/>
    <property type="resolution" value="3.30 A"/>
    <property type="chains" value="QS/XS=1-93"/>
</dbReference>
<dbReference type="PDB" id="5D8B">
    <property type="method" value="X-ray"/>
    <property type="resolution" value="3.63 A"/>
    <property type="chains" value="PC/TA=1-93"/>
</dbReference>
<dbReference type="PDB" id="5DFE">
    <property type="method" value="X-ray"/>
    <property type="resolution" value="3.10 A"/>
    <property type="chains" value="QS/XS=1-93"/>
</dbReference>
<dbReference type="PDB" id="5DOX">
    <property type="method" value="X-ray"/>
    <property type="resolution" value="3.10 A"/>
    <property type="chains" value="1s/2s=1-93"/>
</dbReference>
<dbReference type="PDB" id="5DOY">
    <property type="method" value="X-ray"/>
    <property type="resolution" value="2.60 A"/>
    <property type="chains" value="1s/2s=1-93"/>
</dbReference>
<dbReference type="PDB" id="5E7K">
    <property type="method" value="X-ray"/>
    <property type="resolution" value="3.20 A"/>
    <property type="chains" value="AA/AI=1-93"/>
</dbReference>
<dbReference type="PDB" id="5E81">
    <property type="method" value="X-ray"/>
    <property type="resolution" value="2.95 A"/>
    <property type="chains" value="AA/AI=1-93"/>
</dbReference>
<dbReference type="PDB" id="5EL4">
    <property type="method" value="X-ray"/>
    <property type="resolution" value="3.15 A"/>
    <property type="chains" value="AA/AI=1-93"/>
</dbReference>
<dbReference type="PDB" id="5EL5">
    <property type="method" value="X-ray"/>
    <property type="resolution" value="3.15 A"/>
    <property type="chains" value="AA/AI=1-93"/>
</dbReference>
<dbReference type="PDB" id="5EL6">
    <property type="method" value="X-ray"/>
    <property type="resolution" value="3.10 A"/>
    <property type="chains" value="AA/AI=1-93"/>
</dbReference>
<dbReference type="PDB" id="5EL7">
    <property type="method" value="X-ray"/>
    <property type="resolution" value="3.15 A"/>
    <property type="chains" value="AA/AI=1-93"/>
</dbReference>
<dbReference type="PDB" id="5F8K">
    <property type="method" value="X-ray"/>
    <property type="resolution" value="2.80 A"/>
    <property type="chains" value="1s/2s=2-84"/>
</dbReference>
<dbReference type="PDB" id="5FDU">
    <property type="method" value="X-ray"/>
    <property type="resolution" value="2.90 A"/>
    <property type="chains" value="1s/2s=2-84"/>
</dbReference>
<dbReference type="PDB" id="5FDV">
    <property type="method" value="X-ray"/>
    <property type="resolution" value="2.80 A"/>
    <property type="chains" value="1s/2s=2-84"/>
</dbReference>
<dbReference type="PDB" id="5HAU">
    <property type="method" value="X-ray"/>
    <property type="resolution" value="3.00 A"/>
    <property type="chains" value="1s/2s=1-93"/>
</dbReference>
<dbReference type="PDB" id="5HCP">
    <property type="method" value="X-ray"/>
    <property type="resolution" value="2.89 A"/>
    <property type="chains" value="1s/2s=1-93"/>
</dbReference>
<dbReference type="PDB" id="5HCQ">
    <property type="method" value="X-ray"/>
    <property type="resolution" value="2.80 A"/>
    <property type="chains" value="1s/2s=1-93"/>
</dbReference>
<dbReference type="PDB" id="5HCR">
    <property type="method" value="X-ray"/>
    <property type="resolution" value="2.80 A"/>
    <property type="chains" value="1s/2s=1-93"/>
</dbReference>
<dbReference type="PDB" id="5HD1">
    <property type="method" value="X-ray"/>
    <property type="resolution" value="2.70 A"/>
    <property type="chains" value="1s/2s=1-93"/>
</dbReference>
<dbReference type="PDB" id="5IB7">
    <property type="method" value="X-ray"/>
    <property type="resolution" value="2.99 A"/>
    <property type="chains" value="AA/AI=1-93"/>
</dbReference>
<dbReference type="PDB" id="5IB8">
    <property type="method" value="X-ray"/>
    <property type="resolution" value="3.13 A"/>
    <property type="chains" value="AA/AI=1-93"/>
</dbReference>
<dbReference type="PDB" id="5IBB">
    <property type="method" value="X-ray"/>
    <property type="resolution" value="2.96 A"/>
    <property type="chains" value="AA/AI=1-93"/>
</dbReference>
<dbReference type="PDB" id="5IMQ">
    <property type="method" value="EM"/>
    <property type="resolution" value="3.80 A"/>
    <property type="chains" value="W=1-93"/>
</dbReference>
<dbReference type="PDB" id="5IMR">
    <property type="method" value="EM"/>
    <property type="chains" value="W=1-93"/>
</dbReference>
<dbReference type="PDB" id="5IWA">
    <property type="method" value="X-ray"/>
    <property type="resolution" value="3.50 A"/>
    <property type="chains" value="S=2-84"/>
</dbReference>
<dbReference type="PDB" id="5J30">
    <property type="method" value="X-ray"/>
    <property type="resolution" value="3.20 A"/>
    <property type="chains" value="QS/XS=1-93"/>
</dbReference>
<dbReference type="PDB" id="5J3C">
    <property type="method" value="X-ray"/>
    <property type="resolution" value="3.04 A"/>
    <property type="chains" value="QS/XS=1-93"/>
</dbReference>
<dbReference type="PDB" id="5J4B">
    <property type="method" value="X-ray"/>
    <property type="resolution" value="2.60 A"/>
    <property type="chains" value="1s/2s=1-93"/>
</dbReference>
<dbReference type="PDB" id="5J4C">
    <property type="method" value="X-ray"/>
    <property type="resolution" value="2.80 A"/>
    <property type="chains" value="1s/2s=1-93"/>
</dbReference>
<dbReference type="PDB" id="5J8B">
    <property type="method" value="X-ray"/>
    <property type="resolution" value="2.60 A"/>
    <property type="chains" value="s=1-93"/>
</dbReference>
<dbReference type="PDB" id="5LMN">
    <property type="method" value="EM"/>
    <property type="resolution" value="3.55 A"/>
    <property type="chains" value="S=1-93"/>
</dbReference>
<dbReference type="PDB" id="5LMO">
    <property type="method" value="EM"/>
    <property type="resolution" value="4.30 A"/>
    <property type="chains" value="S=1-93"/>
</dbReference>
<dbReference type="PDB" id="5LMP">
    <property type="method" value="EM"/>
    <property type="resolution" value="5.35 A"/>
    <property type="chains" value="S=1-93"/>
</dbReference>
<dbReference type="PDB" id="5LMQ">
    <property type="method" value="EM"/>
    <property type="resolution" value="4.20 A"/>
    <property type="chains" value="S=1-93"/>
</dbReference>
<dbReference type="PDB" id="5LMR">
    <property type="method" value="EM"/>
    <property type="resolution" value="4.45 A"/>
    <property type="chains" value="S=1-93"/>
</dbReference>
<dbReference type="PDB" id="5LMS">
    <property type="method" value="EM"/>
    <property type="resolution" value="5.10 A"/>
    <property type="chains" value="S=1-93"/>
</dbReference>
<dbReference type="PDB" id="5LMT">
    <property type="method" value="EM"/>
    <property type="resolution" value="4.15 A"/>
    <property type="chains" value="S=1-93"/>
</dbReference>
<dbReference type="PDB" id="5LMU">
    <property type="method" value="EM"/>
    <property type="resolution" value="4.00 A"/>
    <property type="chains" value="S=1-93"/>
</dbReference>
<dbReference type="PDB" id="5LMV">
    <property type="method" value="EM"/>
    <property type="resolution" value="4.90 A"/>
    <property type="chains" value="S=1-93"/>
</dbReference>
<dbReference type="PDB" id="5NDJ">
    <property type="method" value="X-ray"/>
    <property type="resolution" value="3.15 A"/>
    <property type="chains" value="AA/AI=1-93"/>
</dbReference>
<dbReference type="PDB" id="5NDK">
    <property type="method" value="X-ray"/>
    <property type="resolution" value="2.95 A"/>
    <property type="chains" value="AA/AI=1-93"/>
</dbReference>
<dbReference type="PDB" id="5OT7">
    <property type="method" value="EM"/>
    <property type="resolution" value="3.80 A"/>
    <property type="chains" value="R=4-91"/>
</dbReference>
<dbReference type="PDB" id="5UQ7">
    <property type="method" value="EM"/>
    <property type="resolution" value="3.50 A"/>
    <property type="chains" value="s=2-84"/>
</dbReference>
<dbReference type="PDB" id="5UQ8">
    <property type="method" value="EM"/>
    <property type="resolution" value="3.20 A"/>
    <property type="chains" value="s=2-84"/>
</dbReference>
<dbReference type="PDB" id="5VP2">
    <property type="method" value="X-ray"/>
    <property type="resolution" value="2.80 A"/>
    <property type="chains" value="1s/2s=1-93"/>
</dbReference>
<dbReference type="PDB" id="5VPO">
    <property type="method" value="X-ray"/>
    <property type="resolution" value="3.34 A"/>
    <property type="chains" value="QS/XS=1-93"/>
</dbReference>
<dbReference type="PDB" id="5VPP">
    <property type="method" value="X-ray"/>
    <property type="resolution" value="3.90 A"/>
    <property type="chains" value="QS/XS=1-93"/>
</dbReference>
<dbReference type="PDB" id="5W4K">
    <property type="method" value="X-ray"/>
    <property type="resolution" value="2.70 A"/>
    <property type="chains" value="1s/2s=1-93"/>
</dbReference>
<dbReference type="PDB" id="5WIS">
    <property type="method" value="X-ray"/>
    <property type="resolution" value="2.70 A"/>
    <property type="chains" value="1s/2s=1-93"/>
</dbReference>
<dbReference type="PDB" id="5WIT">
    <property type="method" value="X-ray"/>
    <property type="resolution" value="2.60 A"/>
    <property type="chains" value="1s/2s=1-93"/>
</dbReference>
<dbReference type="PDB" id="5WNP">
    <property type="method" value="X-ray"/>
    <property type="resolution" value="3.30 A"/>
    <property type="chains" value="S=2-82"/>
</dbReference>
<dbReference type="PDB" id="5WNQ">
    <property type="method" value="X-ray"/>
    <property type="resolution" value="3.50 A"/>
    <property type="chains" value="S=2-81"/>
</dbReference>
<dbReference type="PDB" id="5WNR">
    <property type="method" value="X-ray"/>
    <property type="resolution" value="3.50 A"/>
    <property type="chains" value="S=2-81"/>
</dbReference>
<dbReference type="PDB" id="5WNS">
    <property type="method" value="X-ray"/>
    <property type="resolution" value="3.50 A"/>
    <property type="chains" value="S=2-81"/>
</dbReference>
<dbReference type="PDB" id="5WNT">
    <property type="method" value="X-ray"/>
    <property type="resolution" value="3.30 A"/>
    <property type="chains" value="S=2-82"/>
</dbReference>
<dbReference type="PDB" id="5WNU">
    <property type="method" value="X-ray"/>
    <property type="resolution" value="3.40 A"/>
    <property type="chains" value="S=2-82"/>
</dbReference>
<dbReference type="PDB" id="5WNV">
    <property type="method" value="X-ray"/>
    <property type="resolution" value="3.30 A"/>
    <property type="chains" value="S=2-82"/>
</dbReference>
<dbReference type="PDB" id="5ZLU">
    <property type="method" value="EM"/>
    <property type="resolution" value="3.60 A"/>
    <property type="chains" value="D=1-93"/>
</dbReference>
<dbReference type="PDB" id="6BUW">
    <property type="method" value="X-ray"/>
    <property type="resolution" value="3.50 A"/>
    <property type="chains" value="QS/XS=1-93"/>
</dbReference>
<dbReference type="PDB" id="6BZ6">
    <property type="method" value="X-ray"/>
    <property type="resolution" value="3.18 A"/>
    <property type="chains" value="QS/XS=1-93"/>
</dbReference>
<dbReference type="PDB" id="6BZ7">
    <property type="method" value="X-ray"/>
    <property type="resolution" value="3.68 A"/>
    <property type="chains" value="QS/XS=1-93"/>
</dbReference>
<dbReference type="PDB" id="6BZ8">
    <property type="method" value="X-ray"/>
    <property type="resolution" value="3.74 A"/>
    <property type="chains" value="QS/XS=1-93"/>
</dbReference>
<dbReference type="PDB" id="6C5L">
    <property type="method" value="X-ray"/>
    <property type="resolution" value="3.20 A"/>
    <property type="chains" value="AS/CS=1-93"/>
</dbReference>
<dbReference type="PDB" id="6CAE">
    <property type="method" value="X-ray"/>
    <property type="resolution" value="2.60 A"/>
    <property type="chains" value="1s/2s=1-93"/>
</dbReference>
<dbReference type="PDB" id="6CAO">
    <property type="method" value="X-ray"/>
    <property type="resolution" value="3.45 A"/>
    <property type="chains" value="S=2-82"/>
</dbReference>
<dbReference type="PDB" id="6CAP">
    <property type="method" value="X-ray"/>
    <property type="resolution" value="3.40 A"/>
    <property type="chains" value="S=2-81"/>
</dbReference>
<dbReference type="PDB" id="6CAQ">
    <property type="method" value="X-ray"/>
    <property type="resolution" value="3.40 A"/>
    <property type="chains" value="S=2-81"/>
</dbReference>
<dbReference type="PDB" id="6CAR">
    <property type="method" value="X-ray"/>
    <property type="resolution" value="3.40 A"/>
    <property type="chains" value="S=2-93"/>
</dbReference>
<dbReference type="PDB" id="6CAS">
    <property type="method" value="X-ray"/>
    <property type="resolution" value="3.50 A"/>
    <property type="chains" value="S=2-93"/>
</dbReference>
<dbReference type="PDB" id="6CFJ">
    <property type="method" value="X-ray"/>
    <property type="resolution" value="2.80 A"/>
    <property type="chains" value="1s/2s=1-93"/>
</dbReference>
<dbReference type="PDB" id="6CFK">
    <property type="method" value="X-ray"/>
    <property type="resolution" value="2.70 A"/>
    <property type="chains" value="1s/2s=1-93"/>
</dbReference>
<dbReference type="PDB" id="6CFL">
    <property type="method" value="X-ray"/>
    <property type="resolution" value="2.60 A"/>
    <property type="chains" value="1s/2s=1-93"/>
</dbReference>
<dbReference type="PDB" id="6CZR">
    <property type="method" value="X-ray"/>
    <property type="resolution" value="3.14 A"/>
    <property type="chains" value="1s/2s=2-84"/>
</dbReference>
<dbReference type="PDB" id="6DTI">
    <property type="method" value="X-ray"/>
    <property type="resolution" value="3.54 A"/>
    <property type="chains" value="S=1-93"/>
</dbReference>
<dbReference type="PDB" id="6FKR">
    <property type="method" value="X-ray"/>
    <property type="resolution" value="3.20 A"/>
    <property type="chains" value="1s/2s=2-84"/>
</dbReference>
<dbReference type="PDB" id="6GSJ">
    <property type="method" value="X-ray"/>
    <property type="resolution" value="2.96 A"/>
    <property type="chains" value="AA/AI=1-93"/>
</dbReference>
<dbReference type="PDB" id="6GSK">
    <property type="method" value="X-ray"/>
    <property type="resolution" value="3.36 A"/>
    <property type="chains" value="AA/AI=1-93"/>
</dbReference>
<dbReference type="PDB" id="6GSL">
    <property type="method" value="X-ray"/>
    <property type="resolution" value="3.16 A"/>
    <property type="chains" value="AA/AI=1-93"/>
</dbReference>
<dbReference type="PDB" id="6GZQ">
    <property type="method" value="EM"/>
    <property type="resolution" value="3.28 A"/>
    <property type="chains" value="S2=7-84"/>
</dbReference>
<dbReference type="PDB" id="6GZX">
    <property type="method" value="EM"/>
    <property type="resolution" value="4.57 A"/>
    <property type="chains" value="S3/S4=7-84"/>
</dbReference>
<dbReference type="PDB" id="6GZZ">
    <property type="method" value="EM"/>
    <property type="resolution" value="4.13 A"/>
    <property type="chains" value="S3/S4=7-84"/>
</dbReference>
<dbReference type="PDB" id="6MKN">
    <property type="method" value="X-ray"/>
    <property type="resolution" value="3.46 A"/>
    <property type="chains" value="S=1-93"/>
</dbReference>
<dbReference type="PDB" id="6MPF">
    <property type="method" value="X-ray"/>
    <property type="resolution" value="3.33 A"/>
    <property type="chains" value="S=2-81"/>
</dbReference>
<dbReference type="PDB" id="6MPI">
    <property type="method" value="X-ray"/>
    <property type="resolution" value="3.33 A"/>
    <property type="chains" value="S=1-93"/>
</dbReference>
<dbReference type="PDB" id="6N9E">
    <property type="method" value="X-ray"/>
    <property type="resolution" value="3.70 A"/>
    <property type="chains" value="1s/2s=1-93"/>
</dbReference>
<dbReference type="PDB" id="6N9F">
    <property type="method" value="X-ray"/>
    <property type="resolution" value="3.70 A"/>
    <property type="chains" value="1s/2s=1-93"/>
</dbReference>
<dbReference type="PDB" id="6ND5">
    <property type="method" value="X-ray"/>
    <property type="resolution" value="2.60 A"/>
    <property type="chains" value="1s/2s=1-93"/>
</dbReference>
<dbReference type="PDB" id="6ND6">
    <property type="method" value="X-ray"/>
    <property type="resolution" value="2.85 A"/>
    <property type="chains" value="1s/2s=1-93"/>
</dbReference>
<dbReference type="PDB" id="6NDK">
    <property type="method" value="X-ray"/>
    <property type="resolution" value="3.64 A"/>
    <property type="chains" value="QS/XS=1-93"/>
</dbReference>
<dbReference type="PDB" id="6NSH">
    <property type="method" value="X-ray"/>
    <property type="resolution" value="3.40 A"/>
    <property type="chains" value="QS/XS=1-93"/>
</dbReference>
<dbReference type="PDB" id="6NTA">
    <property type="method" value="X-ray"/>
    <property type="resolution" value="3.10 A"/>
    <property type="chains" value="QS/XS=1-93"/>
</dbReference>
<dbReference type="PDB" id="6NUO">
    <property type="method" value="X-ray"/>
    <property type="resolution" value="3.20 A"/>
    <property type="chains" value="QS/XS=1-93"/>
</dbReference>
<dbReference type="PDB" id="6NWY">
    <property type="method" value="X-ray"/>
    <property type="resolution" value="3.50 A"/>
    <property type="chains" value="QS/XS=1-93"/>
</dbReference>
<dbReference type="PDB" id="6NY6">
    <property type="method" value="X-ray"/>
    <property type="resolution" value="3.74 A"/>
    <property type="chains" value="S=1-93"/>
</dbReference>
<dbReference type="PDB" id="6O3M">
    <property type="method" value="X-ray"/>
    <property type="resolution" value="3.97 A"/>
    <property type="chains" value="QS/XS=1-93"/>
</dbReference>
<dbReference type="PDB" id="6O97">
    <property type="method" value="X-ray"/>
    <property type="resolution" value="2.75 A"/>
    <property type="chains" value="1s/2s=1-93"/>
</dbReference>
<dbReference type="PDB" id="6OF1">
    <property type="method" value="X-ray"/>
    <property type="resolution" value="2.80 A"/>
    <property type="chains" value="1s/2s=1-93"/>
</dbReference>
<dbReference type="PDB" id="6OF6">
    <property type="method" value="X-ray"/>
    <property type="resolution" value="3.20 A"/>
    <property type="chains" value="QS/XS=1-93"/>
</dbReference>
<dbReference type="PDB" id="6OJ2">
    <property type="method" value="X-ray"/>
    <property type="resolution" value="3.20 A"/>
    <property type="chains" value="QS/XS=1-93"/>
</dbReference>
<dbReference type="PDB" id="6OPE">
    <property type="method" value="X-ray"/>
    <property type="resolution" value="3.10 A"/>
    <property type="chains" value="QS/XS=1-93"/>
</dbReference>
<dbReference type="PDB" id="6ORD">
    <property type="method" value="X-ray"/>
    <property type="resolution" value="3.10 A"/>
    <property type="chains" value="QS/XS=1-93"/>
</dbReference>
<dbReference type="PDB" id="6OSI">
    <property type="method" value="X-ray"/>
    <property type="resolution" value="4.14 A"/>
    <property type="chains" value="QS/XS=1-93"/>
</dbReference>
<dbReference type="PDB" id="6OTR">
    <property type="method" value="X-ray"/>
    <property type="resolution" value="3.12 A"/>
    <property type="chains" value="QS/XS=1-93"/>
</dbReference>
<dbReference type="PDB" id="6OXA">
    <property type="method" value="X-ray"/>
    <property type="resolution" value="3.25 A"/>
    <property type="chains" value="QS/XS=1-93"/>
</dbReference>
<dbReference type="PDB" id="6OXI">
    <property type="method" value="X-ray"/>
    <property type="resolution" value="3.50 A"/>
    <property type="chains" value="QS/XS=1-93"/>
</dbReference>
<dbReference type="PDB" id="6Q95">
    <property type="method" value="EM"/>
    <property type="resolution" value="3.70 A"/>
    <property type="chains" value="x=4-82"/>
</dbReference>
<dbReference type="PDB" id="6QNQ">
    <property type="method" value="X-ray"/>
    <property type="resolution" value="3.50 A"/>
    <property type="chains" value="AA/AI=1-93"/>
</dbReference>
<dbReference type="PDB" id="6QNR">
    <property type="method" value="X-ray"/>
    <property type="resolution" value="3.10 A"/>
    <property type="chains" value="AA/AI=1-93"/>
</dbReference>
<dbReference type="PDB" id="6UCQ">
    <property type="method" value="X-ray"/>
    <property type="resolution" value="3.50 A"/>
    <property type="chains" value="1s/2s=1-93"/>
</dbReference>
<dbReference type="PDB" id="6UO1">
    <property type="method" value="X-ray"/>
    <property type="resolution" value="2.95 A"/>
    <property type="chains" value="1s/2s=1-93"/>
</dbReference>
<dbReference type="PDB" id="6XHV">
    <property type="method" value="X-ray"/>
    <property type="resolution" value="2.40 A"/>
    <property type="chains" value="1s/2s=1-93"/>
</dbReference>
<dbReference type="PDB" id="6XHW">
    <property type="method" value="X-ray"/>
    <property type="resolution" value="2.50 A"/>
    <property type="chains" value="1s/2s=1-93"/>
</dbReference>
<dbReference type="PDB" id="6XHX">
    <property type="method" value="X-ray"/>
    <property type="resolution" value="2.55 A"/>
    <property type="chains" value="1s/2s=1-93"/>
</dbReference>
<dbReference type="PDB" id="6XHY">
    <property type="method" value="X-ray"/>
    <property type="resolution" value="2.60 A"/>
    <property type="chains" value="1s/2s=1-93"/>
</dbReference>
<dbReference type="PDB" id="6XQD">
    <property type="method" value="X-ray"/>
    <property type="resolution" value="2.80 A"/>
    <property type="chains" value="1s/2s=1-93"/>
</dbReference>
<dbReference type="PDB" id="6XQE">
    <property type="method" value="X-ray"/>
    <property type="resolution" value="3.00 A"/>
    <property type="chains" value="1s/2s=1-93"/>
</dbReference>
<dbReference type="PDB" id="7AZO">
    <property type="method" value="X-ray"/>
    <property type="resolution" value="3.30 A"/>
    <property type="chains" value="S19A/S19B=1-93"/>
</dbReference>
<dbReference type="PDB" id="7AZS">
    <property type="method" value="X-ray"/>
    <property type="resolution" value="3.10 A"/>
    <property type="chains" value="S19A/S19B=1-93"/>
</dbReference>
<dbReference type="PDB" id="7DUG">
    <property type="method" value="X-ray"/>
    <property type="resolution" value="3.75 A"/>
    <property type="chains" value="S=1-93"/>
</dbReference>
<dbReference type="PDB" id="7DUH">
    <property type="method" value="X-ray"/>
    <property type="resolution" value="3.75 A"/>
    <property type="chains" value="S=1-93"/>
</dbReference>
<dbReference type="PDB" id="7DUI">
    <property type="method" value="X-ray"/>
    <property type="resolution" value="3.62 A"/>
    <property type="chains" value="S=1-93"/>
</dbReference>
<dbReference type="PDB" id="7DUJ">
    <property type="method" value="X-ray"/>
    <property type="resolution" value="3.75 A"/>
    <property type="chains" value="S=1-93"/>
</dbReference>
<dbReference type="PDB" id="7DUK">
    <property type="method" value="X-ray"/>
    <property type="resolution" value="3.60 A"/>
    <property type="chains" value="S=1-93"/>
</dbReference>
<dbReference type="PDB" id="7DUL">
    <property type="method" value="X-ray"/>
    <property type="resolution" value="3.62 A"/>
    <property type="chains" value="S=1-93"/>
</dbReference>
<dbReference type="PDB" id="7JQL">
    <property type="method" value="X-ray"/>
    <property type="resolution" value="3.00 A"/>
    <property type="chains" value="1s/2s=1-93"/>
</dbReference>
<dbReference type="PDB" id="7JQM">
    <property type="method" value="X-ray"/>
    <property type="resolution" value="3.05 A"/>
    <property type="chains" value="1s/2s=1-93"/>
</dbReference>
<dbReference type="PDB" id="7LH5">
    <property type="method" value="X-ray"/>
    <property type="resolution" value="3.27 A"/>
    <property type="chains" value="AS/CS=1-93"/>
</dbReference>
<dbReference type="PDB" id="7MD7">
    <property type="method" value="X-ray"/>
    <property type="resolution" value="2.80 A"/>
    <property type="chains" value="1s/2s=1-93"/>
</dbReference>
<dbReference type="PDB" id="7RQ8">
    <property type="method" value="X-ray"/>
    <property type="resolution" value="2.50 A"/>
    <property type="chains" value="1s/2s=1-93"/>
</dbReference>
<dbReference type="PDB" id="7RQ9">
    <property type="method" value="X-ray"/>
    <property type="resolution" value="2.60 A"/>
    <property type="chains" value="1s/2s=1-93"/>
</dbReference>
<dbReference type="PDB" id="7RQA">
    <property type="method" value="X-ray"/>
    <property type="resolution" value="2.40 A"/>
    <property type="chains" value="1s/2s=1-93"/>
</dbReference>
<dbReference type="PDB" id="7RQB">
    <property type="method" value="X-ray"/>
    <property type="resolution" value="2.45 A"/>
    <property type="chains" value="1s/2s=1-93"/>
</dbReference>
<dbReference type="PDB" id="7RQC">
    <property type="method" value="X-ray"/>
    <property type="resolution" value="2.50 A"/>
    <property type="chains" value="1s/2s=1-93"/>
</dbReference>
<dbReference type="PDB" id="7RQD">
    <property type="method" value="X-ray"/>
    <property type="resolution" value="2.50 A"/>
    <property type="chains" value="1s/2s=1-93"/>
</dbReference>
<dbReference type="PDB" id="7RQE">
    <property type="method" value="X-ray"/>
    <property type="resolution" value="2.40 A"/>
    <property type="chains" value="1s/2s=1-93"/>
</dbReference>
<dbReference type="PDB" id="7U2H">
    <property type="method" value="X-ray"/>
    <property type="resolution" value="2.55 A"/>
    <property type="chains" value="1s/2s=1-93"/>
</dbReference>
<dbReference type="PDB" id="7U2I">
    <property type="method" value="X-ray"/>
    <property type="resolution" value="2.55 A"/>
    <property type="chains" value="1s/2s=1-93"/>
</dbReference>
<dbReference type="PDB" id="7U2J">
    <property type="method" value="X-ray"/>
    <property type="resolution" value="2.55 A"/>
    <property type="chains" value="1s/2s=1-93"/>
</dbReference>
<dbReference type="PDB" id="7V2L">
    <property type="method" value="EM"/>
    <property type="resolution" value="3.30 A"/>
    <property type="chains" value="S=1-93"/>
</dbReference>
<dbReference type="PDB" id="7V2M">
    <property type="method" value="EM"/>
    <property type="resolution" value="3.40 A"/>
    <property type="chains" value="S=1-93"/>
</dbReference>
<dbReference type="PDB" id="7V2N">
    <property type="method" value="EM"/>
    <property type="resolution" value="3.60 A"/>
    <property type="chains" value="S=1-93"/>
</dbReference>
<dbReference type="PDB" id="7V2O">
    <property type="method" value="EM"/>
    <property type="resolution" value="3.50 A"/>
    <property type="chains" value="S=1-93"/>
</dbReference>
<dbReference type="PDB" id="7V2P">
    <property type="method" value="EM"/>
    <property type="resolution" value="3.30 A"/>
    <property type="chains" value="S=1-93"/>
</dbReference>
<dbReference type="PDB" id="7V2Q">
    <property type="method" value="EM"/>
    <property type="resolution" value="3.24 A"/>
    <property type="chains" value="S=1-93"/>
</dbReference>
<dbReference type="PDB" id="8CVJ">
    <property type="method" value="X-ray"/>
    <property type="resolution" value="2.40 A"/>
    <property type="chains" value="1s/2s=1-93"/>
</dbReference>
<dbReference type="PDB" id="8CVK">
    <property type="method" value="X-ray"/>
    <property type="resolution" value="2.50 A"/>
    <property type="chains" value="1s/2s=1-93"/>
</dbReference>
<dbReference type="PDB" id="8CVL">
    <property type="method" value="X-ray"/>
    <property type="resolution" value="2.30 A"/>
    <property type="chains" value="1s/2s=1-93"/>
</dbReference>
<dbReference type="PDB" id="8EKB">
    <property type="method" value="X-ray"/>
    <property type="resolution" value="2.70 A"/>
    <property type="chains" value="1s/2s=1-93"/>
</dbReference>
<dbReference type="PDB" id="8EV6">
    <property type="method" value="X-ray"/>
    <property type="resolution" value="2.95 A"/>
    <property type="chains" value="1s/2s=1-93"/>
</dbReference>
<dbReference type="PDB" id="8EV7">
    <property type="method" value="X-ray"/>
    <property type="resolution" value="2.89 A"/>
    <property type="chains" value="1s/2s=1-93"/>
</dbReference>
<dbReference type="PDB" id="8FC1">
    <property type="method" value="X-ray"/>
    <property type="resolution" value="2.50 A"/>
    <property type="chains" value="1s/2s=1-93"/>
</dbReference>
<dbReference type="PDB" id="8FC2">
    <property type="method" value="X-ray"/>
    <property type="resolution" value="2.50 A"/>
    <property type="chains" value="1s/2s=1-93"/>
</dbReference>
<dbReference type="PDB" id="8FC3">
    <property type="method" value="X-ray"/>
    <property type="resolution" value="2.60 A"/>
    <property type="chains" value="1s/2s=1-93"/>
</dbReference>
<dbReference type="PDB" id="8FC4">
    <property type="method" value="X-ray"/>
    <property type="resolution" value="2.45 A"/>
    <property type="chains" value="1s/2s=1-93"/>
</dbReference>
<dbReference type="PDB" id="8FC5">
    <property type="method" value="X-ray"/>
    <property type="resolution" value="2.65 A"/>
    <property type="chains" value="1s/2s=1-93"/>
</dbReference>
<dbReference type="PDB" id="8FC6">
    <property type="method" value="X-ray"/>
    <property type="resolution" value="2.35 A"/>
    <property type="chains" value="1s/2s=1-93"/>
</dbReference>
<dbReference type="PDB" id="8FOM">
    <property type="method" value="X-ray"/>
    <property type="resolution" value="3.58 A"/>
    <property type="chains" value="QS/XS=1-93"/>
</dbReference>
<dbReference type="PDB" id="8FON">
    <property type="method" value="X-ray"/>
    <property type="resolution" value="3.64 A"/>
    <property type="chains" value="QS/XS=1-93"/>
</dbReference>
<dbReference type="PDB" id="8G29">
    <property type="method" value="X-ray"/>
    <property type="resolution" value="2.55 A"/>
    <property type="chains" value="1s/2s=1-93"/>
</dbReference>
<dbReference type="PDB" id="8G2A">
    <property type="method" value="X-ray"/>
    <property type="resolution" value="2.45 A"/>
    <property type="chains" value="1s/2s=1-93"/>
</dbReference>
<dbReference type="PDB" id="8G2B">
    <property type="method" value="X-ray"/>
    <property type="resolution" value="2.55 A"/>
    <property type="chains" value="1s/2s=1-93"/>
</dbReference>
<dbReference type="PDB" id="8G2C">
    <property type="method" value="X-ray"/>
    <property type="resolution" value="2.65 A"/>
    <property type="chains" value="1s/2s=1-93"/>
</dbReference>
<dbReference type="PDB" id="8G2D">
    <property type="method" value="X-ray"/>
    <property type="resolution" value="2.70 A"/>
    <property type="chains" value="1s/2s=1-93"/>
</dbReference>
<dbReference type="PDB" id="8T8B">
    <property type="method" value="X-ray"/>
    <property type="resolution" value="2.65 A"/>
    <property type="chains" value="1s/2s=1-93"/>
</dbReference>
<dbReference type="PDB" id="8T8C">
    <property type="method" value="X-ray"/>
    <property type="resolution" value="2.60 A"/>
    <property type="chains" value="1s/2s=1-93"/>
</dbReference>
<dbReference type="PDB" id="8UD6">
    <property type="method" value="X-ray"/>
    <property type="resolution" value="2.70 A"/>
    <property type="chains" value="1s/2s=1-93"/>
</dbReference>
<dbReference type="PDB" id="8UD7">
    <property type="method" value="X-ray"/>
    <property type="resolution" value="2.55 A"/>
    <property type="chains" value="1s/2s=1-93"/>
</dbReference>
<dbReference type="PDB" id="8UD8">
    <property type="method" value="X-ray"/>
    <property type="resolution" value="2.60 A"/>
    <property type="chains" value="1s/2s=1-93"/>
</dbReference>
<dbReference type="PDB" id="8UVR">
    <property type="method" value="X-ray"/>
    <property type="resolution" value="2.60 A"/>
    <property type="chains" value="1s/2s=1-93"/>
</dbReference>
<dbReference type="PDB" id="8UVS">
    <property type="method" value="X-ray"/>
    <property type="resolution" value="2.75 A"/>
    <property type="chains" value="1s/2s=1-93"/>
</dbReference>
<dbReference type="PDB" id="8VTU">
    <property type="method" value="X-ray"/>
    <property type="resolution" value="2.40 A"/>
    <property type="chains" value="1s/2s=1-93"/>
</dbReference>
<dbReference type="PDB" id="8VTV">
    <property type="method" value="X-ray"/>
    <property type="resolution" value="2.55 A"/>
    <property type="chains" value="1s/2s=1-93"/>
</dbReference>
<dbReference type="PDB" id="8VTW">
    <property type="method" value="X-ray"/>
    <property type="resolution" value="2.35 A"/>
    <property type="chains" value="1s/2s=1-93"/>
</dbReference>
<dbReference type="PDB" id="8VTX">
    <property type="method" value="X-ray"/>
    <property type="resolution" value="2.40 A"/>
    <property type="chains" value="1s/2s=1-93"/>
</dbReference>
<dbReference type="PDB" id="8VTY">
    <property type="method" value="X-ray"/>
    <property type="resolution" value="2.60 A"/>
    <property type="chains" value="1s/2s=1-93"/>
</dbReference>
<dbReference type="PDB" id="9B00">
    <property type="method" value="X-ray"/>
    <property type="resolution" value="2.80 A"/>
    <property type="chains" value="1s/2s=1-93"/>
</dbReference>
<dbReference type="PDB" id="9D0J">
    <property type="method" value="X-ray"/>
    <property type="resolution" value="2.50 A"/>
    <property type="chains" value="1s/2s=1-93"/>
</dbReference>
<dbReference type="PDB" id="9D7R">
    <property type="method" value="X-ray"/>
    <property type="resolution" value="2.70 A"/>
    <property type="chains" value="1s/2s=1-93"/>
</dbReference>
<dbReference type="PDB" id="9D7S">
    <property type="method" value="X-ray"/>
    <property type="resolution" value="2.85 A"/>
    <property type="chains" value="1s/2s=1-93"/>
</dbReference>
<dbReference type="PDB" id="9D7T">
    <property type="method" value="X-ray"/>
    <property type="resolution" value="2.70 A"/>
    <property type="chains" value="1s/2s=1-93"/>
</dbReference>
<dbReference type="PDB" id="9DFC">
    <property type="method" value="X-ray"/>
    <property type="resolution" value="2.50 A"/>
    <property type="chains" value="1s/2s=1-93"/>
</dbReference>
<dbReference type="PDB" id="9DFD">
    <property type="method" value="X-ray"/>
    <property type="resolution" value="2.60 A"/>
    <property type="chains" value="1s/2s=1-93"/>
</dbReference>
<dbReference type="PDB" id="9DFE">
    <property type="method" value="X-ray"/>
    <property type="resolution" value="2.60 A"/>
    <property type="chains" value="1s/2s=1-93"/>
</dbReference>
<dbReference type="PDBsum" id="1FJG"/>
<dbReference type="PDBsum" id="1FKA"/>
<dbReference type="PDBsum" id="1HNW"/>
<dbReference type="PDBsum" id="1HNX"/>
<dbReference type="PDBsum" id="1HNZ"/>
<dbReference type="PDBsum" id="1HR0"/>
<dbReference type="PDBsum" id="1I94"/>
<dbReference type="PDBsum" id="1I95"/>
<dbReference type="PDBsum" id="1I96"/>
<dbReference type="PDBsum" id="1I97"/>
<dbReference type="PDBsum" id="1IBK"/>
<dbReference type="PDBsum" id="1IBL"/>
<dbReference type="PDBsum" id="1IBM"/>
<dbReference type="PDBsum" id="1J5E"/>
<dbReference type="PDBsum" id="1JGO"/>
<dbReference type="PDBsum" id="1JGP"/>
<dbReference type="PDBsum" id="1JGQ"/>
<dbReference type="PDBsum" id="1ML5"/>
<dbReference type="PDBsum" id="1N32"/>
<dbReference type="PDBsum" id="1N33"/>
<dbReference type="PDBsum" id="1N34"/>
<dbReference type="PDBsum" id="1N36"/>
<dbReference type="PDBsum" id="1VVJ"/>
<dbReference type="PDBsum" id="1VY4"/>
<dbReference type="PDBsum" id="1VY5"/>
<dbReference type="PDBsum" id="1VY6"/>
<dbReference type="PDBsum" id="1VY7"/>
<dbReference type="PDBsum" id="1XMO"/>
<dbReference type="PDBsum" id="1XMQ"/>
<dbReference type="PDBsum" id="1XNQ"/>
<dbReference type="PDBsum" id="1XNR"/>
<dbReference type="PDBsum" id="2E5L"/>
<dbReference type="PDBsum" id="2F4V"/>
<dbReference type="PDBsum" id="2HHH"/>
<dbReference type="PDBsum" id="2UU9"/>
<dbReference type="PDBsum" id="2UUA"/>
<dbReference type="PDBsum" id="2UUB"/>
<dbReference type="PDBsum" id="2UUC"/>
<dbReference type="PDBsum" id="2UXB"/>
<dbReference type="PDBsum" id="2UXC"/>
<dbReference type="PDBsum" id="2UXD"/>
<dbReference type="PDBsum" id="2VQE"/>
<dbReference type="PDBsum" id="2VQF"/>
<dbReference type="PDBsum" id="2ZM6"/>
<dbReference type="PDBsum" id="3A1P"/>
<dbReference type="PDBsum" id="3OTO"/>
<dbReference type="PDBsum" id="3T1H"/>
<dbReference type="PDBsum" id="3T1Y"/>
<dbReference type="PDBsum" id="4AQY"/>
<dbReference type="PDBsum" id="4B3M"/>
<dbReference type="PDBsum" id="4B3R"/>
<dbReference type="PDBsum" id="4B3S"/>
<dbReference type="PDBsum" id="4B3T"/>
<dbReference type="PDBsum" id="4DR1"/>
<dbReference type="PDBsum" id="4DR2"/>
<dbReference type="PDBsum" id="4DR3"/>
<dbReference type="PDBsum" id="4DR4"/>
<dbReference type="PDBsum" id="4DR5"/>
<dbReference type="PDBsum" id="4DR6"/>
<dbReference type="PDBsum" id="4DR7"/>
<dbReference type="PDBsum" id="4DUY"/>
<dbReference type="PDBsum" id="4DUZ"/>
<dbReference type="PDBsum" id="4DV0"/>
<dbReference type="PDBsum" id="4DV1"/>
<dbReference type="PDBsum" id="4DV2"/>
<dbReference type="PDBsum" id="4DV3"/>
<dbReference type="PDBsum" id="4DV4"/>
<dbReference type="PDBsum" id="4DV5"/>
<dbReference type="PDBsum" id="4DV6"/>
<dbReference type="PDBsum" id="4DV7"/>
<dbReference type="PDBsum" id="4GKJ"/>
<dbReference type="PDBsum" id="4GKK"/>
<dbReference type="PDBsum" id="4JI0"/>
<dbReference type="PDBsum" id="4JI1"/>
<dbReference type="PDBsum" id="4JI2"/>
<dbReference type="PDBsum" id="4JI3"/>
<dbReference type="PDBsum" id="4JI4"/>
<dbReference type="PDBsum" id="4JI5"/>
<dbReference type="PDBsum" id="4JI6"/>
<dbReference type="PDBsum" id="4JI7"/>
<dbReference type="PDBsum" id="4JI8"/>
<dbReference type="PDBsum" id="4JV5"/>
<dbReference type="PDBsum" id="4JYA"/>
<dbReference type="PDBsum" id="4K0K"/>
<dbReference type="PDBsum" id="4KHP"/>
<dbReference type="PDBsum" id="4L47"/>
<dbReference type="PDBsum" id="4L71"/>
<dbReference type="PDBsum" id="4LEL"/>
<dbReference type="PDBsum" id="4LF4"/>
<dbReference type="PDBsum" id="4LF5"/>
<dbReference type="PDBsum" id="4LF6"/>
<dbReference type="PDBsum" id="4LF7"/>
<dbReference type="PDBsum" id="4LF8"/>
<dbReference type="PDBsum" id="4LF9"/>
<dbReference type="PDBsum" id="4LFA"/>
<dbReference type="PDBsum" id="4LFB"/>
<dbReference type="PDBsum" id="4LFC"/>
<dbReference type="PDBsum" id="4LFZ"/>
<dbReference type="PDBsum" id="4LNT"/>
<dbReference type="PDBsum" id="4LSK"/>
<dbReference type="PDBsum" id="4LT8"/>
<dbReference type="PDBsum" id="4NXM"/>
<dbReference type="PDBsum" id="4NXN"/>
<dbReference type="PDBsum" id="4OX9"/>
<dbReference type="PDBsum" id="4P6F"/>
<dbReference type="PDBsum" id="4P70"/>
<dbReference type="PDBsum" id="4TUA"/>
<dbReference type="PDBsum" id="4TUB"/>
<dbReference type="PDBsum" id="4TUC"/>
<dbReference type="PDBsum" id="4TUD"/>
<dbReference type="PDBsum" id="4TUE"/>
<dbReference type="PDBsum" id="4V42"/>
<dbReference type="PDBsum" id="4V49"/>
<dbReference type="PDBsum" id="4V4A"/>
<dbReference type="PDBsum" id="4V4I"/>
<dbReference type="PDBsum" id="4V4P"/>
<dbReference type="PDBsum" id="4V4R"/>
<dbReference type="PDBsum" id="4V4S"/>
<dbReference type="PDBsum" id="4V4T"/>
<dbReference type="PDBsum" id="4V4X"/>
<dbReference type="PDBsum" id="4V4Y"/>
<dbReference type="PDBsum" id="4V4Z"/>
<dbReference type="PDBsum" id="4V51"/>
<dbReference type="PDBsum" id="4V5A"/>
<dbReference type="PDBsum" id="4V5C"/>
<dbReference type="PDBsum" id="4V5D"/>
<dbReference type="PDBsum" id="4V5E"/>
<dbReference type="PDBsum" id="4V5F"/>
<dbReference type="PDBsum" id="4V5G"/>
<dbReference type="PDBsum" id="4V5J"/>
<dbReference type="PDBsum" id="4V5K"/>
<dbReference type="PDBsum" id="4V5L"/>
<dbReference type="PDBsum" id="4V5M"/>
<dbReference type="PDBsum" id="4V5N"/>
<dbReference type="PDBsum" id="4V5P"/>
<dbReference type="PDBsum" id="4V5Q"/>
<dbReference type="PDBsum" id="4V5R"/>
<dbReference type="PDBsum" id="4V5S"/>
<dbReference type="PDBsum" id="4V68"/>
<dbReference type="PDBsum" id="4V6A"/>
<dbReference type="PDBsum" id="4V6F"/>
<dbReference type="PDBsum" id="4V6G"/>
<dbReference type="PDBsum" id="4V7J"/>
<dbReference type="PDBsum" id="4V7K"/>
<dbReference type="PDBsum" id="4V7L"/>
<dbReference type="PDBsum" id="4V7M"/>
<dbReference type="PDBsum" id="4V7W"/>
<dbReference type="PDBsum" id="4V7X"/>
<dbReference type="PDBsum" id="4V7Y"/>
<dbReference type="PDBsum" id="4V7Z"/>
<dbReference type="PDBsum" id="4V87"/>
<dbReference type="PDBsum" id="4V8A"/>
<dbReference type="PDBsum" id="4V8B"/>
<dbReference type="PDBsum" id="4V8C"/>
<dbReference type="PDBsum" id="4V8D"/>
<dbReference type="PDBsum" id="4V8E"/>
<dbReference type="PDBsum" id="4V8F"/>
<dbReference type="PDBsum" id="4V8G"/>
<dbReference type="PDBsum" id="4V8H"/>
<dbReference type="PDBsum" id="4V8I"/>
<dbReference type="PDBsum" id="4V8J"/>
<dbReference type="PDBsum" id="4V8N"/>
<dbReference type="PDBsum" id="4V8O"/>
<dbReference type="PDBsum" id="4V8Q"/>
<dbReference type="PDBsum" id="4V8U"/>
<dbReference type="PDBsum" id="4V8X"/>
<dbReference type="PDBsum" id="4V90"/>
<dbReference type="PDBsum" id="4V95"/>
<dbReference type="PDBsum" id="4V97"/>
<dbReference type="PDBsum" id="4V9A"/>
<dbReference type="PDBsum" id="4V9B"/>
<dbReference type="PDBsum" id="4V9H"/>
<dbReference type="PDBsum" id="4V9I"/>
<dbReference type="PDBsum" id="4V9R"/>
<dbReference type="PDBsum" id="4V9S"/>
<dbReference type="PDBsum" id="4W2E"/>
<dbReference type="PDBsum" id="4W2F"/>
<dbReference type="PDBsum" id="4W2G"/>
<dbReference type="PDBsum" id="4W2H"/>
<dbReference type="PDBsum" id="4W2I"/>
<dbReference type="PDBsum" id="4W4G"/>
<dbReference type="PDBsum" id="4WPO"/>
<dbReference type="PDBsum" id="4WQ1"/>
<dbReference type="PDBsum" id="4WQF"/>
<dbReference type="PDBsum" id="4WQR"/>
<dbReference type="PDBsum" id="4WQU"/>
<dbReference type="PDBsum" id="4WQY"/>
<dbReference type="PDBsum" id="4WR6"/>
<dbReference type="PDBsum" id="4WRA"/>
<dbReference type="PDBsum" id="4WRO"/>
<dbReference type="PDBsum" id="4WSD"/>
<dbReference type="PDBsum" id="4WSM"/>
<dbReference type="PDBsum" id="4WT1"/>
<dbReference type="PDBsum" id="4WT8"/>
<dbReference type="PDBsum" id="4WU1"/>
<dbReference type="PDBsum" id="4WZD"/>
<dbReference type="PDBsum" id="4WZO"/>
<dbReference type="PDBsum" id="4X62"/>
<dbReference type="PDBsum" id="4X64"/>
<dbReference type="PDBsum" id="4X65"/>
<dbReference type="PDBsum" id="4X66"/>
<dbReference type="PDBsum" id="4Y4O"/>
<dbReference type="PDBsum" id="4Y4P"/>
<dbReference type="PDBsum" id="4YHH"/>
<dbReference type="PDBsum" id="4YPB"/>
<dbReference type="PDBsum" id="4YY3"/>
<dbReference type="PDBsum" id="4YZV"/>
<dbReference type="PDBsum" id="4Z3S"/>
<dbReference type="PDBsum" id="4Z8C"/>
<dbReference type="PDBsum" id="4ZER"/>
<dbReference type="PDBsum" id="4ZSN"/>
<dbReference type="PDBsum" id="5A9Z"/>
<dbReference type="PDBsum" id="5AA0"/>
<dbReference type="PDBsum" id="5BR8"/>
<dbReference type="PDBsum" id="5CZP"/>
<dbReference type="PDBsum" id="5D8B"/>
<dbReference type="PDBsum" id="5DFE"/>
<dbReference type="PDBsum" id="5DOX"/>
<dbReference type="PDBsum" id="5DOY"/>
<dbReference type="PDBsum" id="5E7K"/>
<dbReference type="PDBsum" id="5E81"/>
<dbReference type="PDBsum" id="5EL4"/>
<dbReference type="PDBsum" id="5EL5"/>
<dbReference type="PDBsum" id="5EL6"/>
<dbReference type="PDBsum" id="5EL7"/>
<dbReference type="PDBsum" id="5F8K"/>
<dbReference type="PDBsum" id="5FDU"/>
<dbReference type="PDBsum" id="5FDV"/>
<dbReference type="PDBsum" id="5HAU"/>
<dbReference type="PDBsum" id="5HCP"/>
<dbReference type="PDBsum" id="5HCQ"/>
<dbReference type="PDBsum" id="5HCR"/>
<dbReference type="PDBsum" id="5HD1"/>
<dbReference type="PDBsum" id="5IB7"/>
<dbReference type="PDBsum" id="5IB8"/>
<dbReference type="PDBsum" id="5IBB"/>
<dbReference type="PDBsum" id="5IMQ"/>
<dbReference type="PDBsum" id="5IMR"/>
<dbReference type="PDBsum" id="5IWA"/>
<dbReference type="PDBsum" id="5J30"/>
<dbReference type="PDBsum" id="5J3C"/>
<dbReference type="PDBsum" id="5J4B"/>
<dbReference type="PDBsum" id="5J4C"/>
<dbReference type="PDBsum" id="5J8B"/>
<dbReference type="PDBsum" id="5LMN"/>
<dbReference type="PDBsum" id="5LMO"/>
<dbReference type="PDBsum" id="5LMP"/>
<dbReference type="PDBsum" id="5LMQ"/>
<dbReference type="PDBsum" id="5LMR"/>
<dbReference type="PDBsum" id="5LMS"/>
<dbReference type="PDBsum" id="5LMT"/>
<dbReference type="PDBsum" id="5LMU"/>
<dbReference type="PDBsum" id="5LMV"/>
<dbReference type="PDBsum" id="5NDJ"/>
<dbReference type="PDBsum" id="5NDK"/>
<dbReference type="PDBsum" id="5OT7"/>
<dbReference type="PDBsum" id="5UQ7"/>
<dbReference type="PDBsum" id="5UQ8"/>
<dbReference type="PDBsum" id="5VP2"/>
<dbReference type="PDBsum" id="5VPO"/>
<dbReference type="PDBsum" id="5VPP"/>
<dbReference type="PDBsum" id="5W4K"/>
<dbReference type="PDBsum" id="5WIS"/>
<dbReference type="PDBsum" id="5WIT"/>
<dbReference type="PDBsum" id="5WNP"/>
<dbReference type="PDBsum" id="5WNQ"/>
<dbReference type="PDBsum" id="5WNR"/>
<dbReference type="PDBsum" id="5WNS"/>
<dbReference type="PDBsum" id="5WNT"/>
<dbReference type="PDBsum" id="5WNU"/>
<dbReference type="PDBsum" id="5WNV"/>
<dbReference type="PDBsum" id="5ZLU"/>
<dbReference type="PDBsum" id="6BUW"/>
<dbReference type="PDBsum" id="6BZ6"/>
<dbReference type="PDBsum" id="6BZ7"/>
<dbReference type="PDBsum" id="6BZ8"/>
<dbReference type="PDBsum" id="6C5L"/>
<dbReference type="PDBsum" id="6CAE"/>
<dbReference type="PDBsum" id="6CAO"/>
<dbReference type="PDBsum" id="6CAP"/>
<dbReference type="PDBsum" id="6CAQ"/>
<dbReference type="PDBsum" id="6CAR"/>
<dbReference type="PDBsum" id="6CAS"/>
<dbReference type="PDBsum" id="6CFJ"/>
<dbReference type="PDBsum" id="6CFK"/>
<dbReference type="PDBsum" id="6CFL"/>
<dbReference type="PDBsum" id="6CZR"/>
<dbReference type="PDBsum" id="6DTI"/>
<dbReference type="PDBsum" id="6FKR"/>
<dbReference type="PDBsum" id="6GSJ"/>
<dbReference type="PDBsum" id="6GSK"/>
<dbReference type="PDBsum" id="6GSL"/>
<dbReference type="PDBsum" id="6GZQ"/>
<dbReference type="PDBsum" id="6GZX"/>
<dbReference type="PDBsum" id="6GZZ"/>
<dbReference type="PDBsum" id="6MKN"/>
<dbReference type="PDBsum" id="6MPF"/>
<dbReference type="PDBsum" id="6MPI"/>
<dbReference type="PDBsum" id="6N9E"/>
<dbReference type="PDBsum" id="6N9F"/>
<dbReference type="PDBsum" id="6ND5"/>
<dbReference type="PDBsum" id="6ND6"/>
<dbReference type="PDBsum" id="6NDK"/>
<dbReference type="PDBsum" id="6NSH"/>
<dbReference type="PDBsum" id="6NTA"/>
<dbReference type="PDBsum" id="6NUO"/>
<dbReference type="PDBsum" id="6NWY"/>
<dbReference type="PDBsum" id="6NY6"/>
<dbReference type="PDBsum" id="6O3M"/>
<dbReference type="PDBsum" id="6O97"/>
<dbReference type="PDBsum" id="6OF1"/>
<dbReference type="PDBsum" id="6OF6"/>
<dbReference type="PDBsum" id="6OJ2"/>
<dbReference type="PDBsum" id="6OPE"/>
<dbReference type="PDBsum" id="6ORD"/>
<dbReference type="PDBsum" id="6OSI"/>
<dbReference type="PDBsum" id="6OTR"/>
<dbReference type="PDBsum" id="6OXA"/>
<dbReference type="PDBsum" id="6OXI"/>
<dbReference type="PDBsum" id="6Q95"/>
<dbReference type="PDBsum" id="6QNQ"/>
<dbReference type="PDBsum" id="6QNR"/>
<dbReference type="PDBsum" id="6UCQ"/>
<dbReference type="PDBsum" id="6UO1"/>
<dbReference type="PDBsum" id="6XHV"/>
<dbReference type="PDBsum" id="6XHW"/>
<dbReference type="PDBsum" id="6XHX"/>
<dbReference type="PDBsum" id="6XHY"/>
<dbReference type="PDBsum" id="6XQD"/>
<dbReference type="PDBsum" id="6XQE"/>
<dbReference type="PDBsum" id="7AZO"/>
<dbReference type="PDBsum" id="7AZS"/>
<dbReference type="PDBsum" id="7DUG"/>
<dbReference type="PDBsum" id="7DUH"/>
<dbReference type="PDBsum" id="7DUI"/>
<dbReference type="PDBsum" id="7DUJ"/>
<dbReference type="PDBsum" id="7DUK"/>
<dbReference type="PDBsum" id="7DUL"/>
<dbReference type="PDBsum" id="7JQL"/>
<dbReference type="PDBsum" id="7JQM"/>
<dbReference type="PDBsum" id="7LH5"/>
<dbReference type="PDBsum" id="7MD7"/>
<dbReference type="PDBsum" id="7RQ8"/>
<dbReference type="PDBsum" id="7RQ9"/>
<dbReference type="PDBsum" id="7RQA"/>
<dbReference type="PDBsum" id="7RQB"/>
<dbReference type="PDBsum" id="7RQC"/>
<dbReference type="PDBsum" id="7RQD"/>
<dbReference type="PDBsum" id="7RQE"/>
<dbReference type="PDBsum" id="7U2H"/>
<dbReference type="PDBsum" id="7U2I"/>
<dbReference type="PDBsum" id="7U2J"/>
<dbReference type="PDBsum" id="7V2L"/>
<dbReference type="PDBsum" id="7V2M"/>
<dbReference type="PDBsum" id="7V2N"/>
<dbReference type="PDBsum" id="7V2O"/>
<dbReference type="PDBsum" id="7V2P"/>
<dbReference type="PDBsum" id="7V2Q"/>
<dbReference type="PDBsum" id="8CVJ"/>
<dbReference type="PDBsum" id="8CVK"/>
<dbReference type="PDBsum" id="8CVL"/>
<dbReference type="PDBsum" id="8EKB"/>
<dbReference type="PDBsum" id="8EV6"/>
<dbReference type="PDBsum" id="8EV7"/>
<dbReference type="PDBsum" id="8FC1"/>
<dbReference type="PDBsum" id="8FC2"/>
<dbReference type="PDBsum" id="8FC3"/>
<dbReference type="PDBsum" id="8FC4"/>
<dbReference type="PDBsum" id="8FC5"/>
<dbReference type="PDBsum" id="8FC6"/>
<dbReference type="PDBsum" id="8FOM"/>
<dbReference type="PDBsum" id="8FON"/>
<dbReference type="PDBsum" id="8G29"/>
<dbReference type="PDBsum" id="8G2A"/>
<dbReference type="PDBsum" id="8G2B"/>
<dbReference type="PDBsum" id="8G2C"/>
<dbReference type="PDBsum" id="8G2D"/>
<dbReference type="PDBsum" id="8T8B"/>
<dbReference type="PDBsum" id="8T8C"/>
<dbReference type="PDBsum" id="8UD6"/>
<dbReference type="PDBsum" id="8UD7"/>
<dbReference type="PDBsum" id="8UD8"/>
<dbReference type="PDBsum" id="8UVR"/>
<dbReference type="PDBsum" id="8UVS"/>
<dbReference type="PDBsum" id="8VTU"/>
<dbReference type="PDBsum" id="8VTV"/>
<dbReference type="PDBsum" id="8VTW"/>
<dbReference type="PDBsum" id="8VTX"/>
<dbReference type="PDBsum" id="8VTY"/>
<dbReference type="PDBsum" id="9B00"/>
<dbReference type="PDBsum" id="9D0J"/>
<dbReference type="PDBsum" id="9D7R"/>
<dbReference type="PDBsum" id="9D7S"/>
<dbReference type="PDBsum" id="9D7T"/>
<dbReference type="PDBsum" id="9DFC"/>
<dbReference type="PDBsum" id="9DFD"/>
<dbReference type="PDBsum" id="9DFE"/>
<dbReference type="BMRB" id="Q5SHP2"/>
<dbReference type="EMDB" id="EMD-0101"/>
<dbReference type="EMDB" id="EMD-0104"/>
<dbReference type="EMDB" id="EMD-0105"/>
<dbReference type="EMDB" id="EMD-31655"/>
<dbReference type="EMDB" id="EMD-31656"/>
<dbReference type="EMDB" id="EMD-31657"/>
<dbReference type="EMDB" id="EMD-31658"/>
<dbReference type="EMDB" id="EMD-31659"/>
<dbReference type="EMDB" id="EMD-31660"/>
<dbReference type="EMDB" id="EMD-3852"/>
<dbReference type="EMDB" id="EMD-4073"/>
<dbReference type="EMDB" id="EMD-4074"/>
<dbReference type="EMDB" id="EMD-4075"/>
<dbReference type="EMDB" id="EMD-4076"/>
<dbReference type="EMDB" id="EMD-4077"/>
<dbReference type="EMDB" id="EMD-4078"/>
<dbReference type="EMDB" id="EMD-4079"/>
<dbReference type="EMDB" id="EMD-4080"/>
<dbReference type="EMDB" id="EMD-4083"/>
<dbReference type="EMDB" id="EMD-4475"/>
<dbReference type="EMDB" id="EMD-6934"/>
<dbReference type="EMDB" id="EMD-8596"/>
<dbReference type="EMDB" id="EMD-8597"/>
<dbReference type="SMR" id="Q5SHP2"/>
<dbReference type="IntAct" id="Q5SHP2">
    <property type="interactions" value="10"/>
</dbReference>
<dbReference type="DrugBank" id="DB08185">
    <property type="generic name" value="2-METHYLTHIO-N6-ISOPENTENYL-ADENOSINE-5'-MONOPHOSPHATE"/>
</dbReference>
<dbReference type="EnsemblBacteria" id="BAD71511">
    <property type="protein sequence ID" value="BAD71511"/>
    <property type="gene ID" value="BAD71511"/>
</dbReference>
<dbReference type="GeneID" id="93866431"/>
<dbReference type="KEGG" id="ttj:TTHA1688"/>
<dbReference type="PATRIC" id="fig|300852.9.peg.1658"/>
<dbReference type="eggNOG" id="COG0185">
    <property type="taxonomic scope" value="Bacteria"/>
</dbReference>
<dbReference type="HOGENOM" id="CLU_144911_0_1_0"/>
<dbReference type="PhylomeDB" id="Q5SHP2"/>
<dbReference type="EvolutionaryTrace" id="Q5SHP2"/>
<dbReference type="Proteomes" id="UP000000532">
    <property type="component" value="Chromosome"/>
</dbReference>
<dbReference type="GO" id="GO:0005737">
    <property type="term" value="C:cytoplasm"/>
    <property type="evidence" value="ECO:0007669"/>
    <property type="project" value="UniProtKB-ARBA"/>
</dbReference>
<dbReference type="GO" id="GO:0015935">
    <property type="term" value="C:small ribosomal subunit"/>
    <property type="evidence" value="ECO:0007669"/>
    <property type="project" value="InterPro"/>
</dbReference>
<dbReference type="GO" id="GO:0019843">
    <property type="term" value="F:rRNA binding"/>
    <property type="evidence" value="ECO:0007669"/>
    <property type="project" value="UniProtKB-UniRule"/>
</dbReference>
<dbReference type="GO" id="GO:0003735">
    <property type="term" value="F:structural constituent of ribosome"/>
    <property type="evidence" value="ECO:0007669"/>
    <property type="project" value="InterPro"/>
</dbReference>
<dbReference type="GO" id="GO:0000028">
    <property type="term" value="P:ribosomal small subunit assembly"/>
    <property type="evidence" value="ECO:0007669"/>
    <property type="project" value="TreeGrafter"/>
</dbReference>
<dbReference type="GO" id="GO:0006412">
    <property type="term" value="P:translation"/>
    <property type="evidence" value="ECO:0007669"/>
    <property type="project" value="UniProtKB-UniRule"/>
</dbReference>
<dbReference type="FunFam" id="3.30.860.10:FF:000001">
    <property type="entry name" value="30S ribosomal protein S19"/>
    <property type="match status" value="1"/>
</dbReference>
<dbReference type="Gene3D" id="3.30.860.10">
    <property type="entry name" value="30s Ribosomal Protein S19, Chain A"/>
    <property type="match status" value="1"/>
</dbReference>
<dbReference type="HAMAP" id="MF_00531">
    <property type="entry name" value="Ribosomal_uS19"/>
    <property type="match status" value="1"/>
</dbReference>
<dbReference type="InterPro" id="IPR002222">
    <property type="entry name" value="Ribosomal_uS19"/>
</dbReference>
<dbReference type="InterPro" id="IPR005732">
    <property type="entry name" value="Ribosomal_uS19_bac-type"/>
</dbReference>
<dbReference type="InterPro" id="IPR020934">
    <property type="entry name" value="Ribosomal_uS19_CS"/>
</dbReference>
<dbReference type="InterPro" id="IPR023575">
    <property type="entry name" value="Ribosomal_uS19_SF"/>
</dbReference>
<dbReference type="NCBIfam" id="TIGR01050">
    <property type="entry name" value="rpsS_bact"/>
    <property type="match status" value="1"/>
</dbReference>
<dbReference type="PANTHER" id="PTHR11880">
    <property type="entry name" value="RIBOSOMAL PROTEIN S19P FAMILY MEMBER"/>
    <property type="match status" value="1"/>
</dbReference>
<dbReference type="PANTHER" id="PTHR11880:SF8">
    <property type="entry name" value="SMALL RIBOSOMAL SUBUNIT PROTEIN US19M"/>
    <property type="match status" value="1"/>
</dbReference>
<dbReference type="Pfam" id="PF00203">
    <property type="entry name" value="Ribosomal_S19"/>
    <property type="match status" value="1"/>
</dbReference>
<dbReference type="PIRSF" id="PIRSF002144">
    <property type="entry name" value="Ribosomal_S19"/>
    <property type="match status" value="1"/>
</dbReference>
<dbReference type="PRINTS" id="PR00975">
    <property type="entry name" value="RIBOSOMALS19"/>
</dbReference>
<dbReference type="SUPFAM" id="SSF54570">
    <property type="entry name" value="Ribosomal protein S19"/>
    <property type="match status" value="1"/>
</dbReference>
<dbReference type="PROSITE" id="PS00323">
    <property type="entry name" value="RIBOSOMAL_S19"/>
    <property type="match status" value="1"/>
</dbReference>
<evidence type="ECO:0000269" key="1">
    <source>
    </source>
</evidence>
<evidence type="ECO:0000269" key="2">
    <source>
    </source>
</evidence>
<evidence type="ECO:0000305" key="3"/>
<evidence type="ECO:0007829" key="4">
    <source>
        <dbReference type="PDB" id="2VQF"/>
    </source>
</evidence>
<evidence type="ECO:0007829" key="5">
    <source>
        <dbReference type="PDB" id="3A1P"/>
    </source>
</evidence>
<evidence type="ECO:0007829" key="6">
    <source>
        <dbReference type="PDB" id="4GKJ"/>
    </source>
</evidence>
<evidence type="ECO:0007829" key="7">
    <source>
        <dbReference type="PDB" id="4JYA"/>
    </source>
</evidence>
<reference key="1">
    <citation type="submission" date="2004-11" db="EMBL/GenBank/DDBJ databases">
        <title>Complete genome sequence of Thermus thermophilus HB8.</title>
        <authorList>
            <person name="Masui R."/>
            <person name="Kurokawa K."/>
            <person name="Nakagawa N."/>
            <person name="Tokunaga F."/>
            <person name="Koyama Y."/>
            <person name="Shibata T."/>
            <person name="Oshima T."/>
            <person name="Yokoyama S."/>
            <person name="Yasunaga T."/>
            <person name="Kuramitsu S."/>
        </authorList>
    </citation>
    <scope>NUCLEOTIDE SEQUENCE [LARGE SCALE GENOMIC DNA]</scope>
    <source>
        <strain>ATCC 27634 / DSM 579 / HB8</strain>
    </source>
</reference>
<reference key="2">
    <citation type="journal article" date="1994" name="Eur. J. Biochem.">
        <title>Purification and characterization of the 30S ribosomal proteins from the bacterium Thermus thermophilus.</title>
        <authorList>
            <person name="Tsiboli P."/>
            <person name="Herfurth E."/>
            <person name="Choli T."/>
        </authorList>
    </citation>
    <scope>PROTEIN SEQUENCE OF 2-31</scope>
</reference>
<reference key="3">
    <citation type="journal article" date="2005" name="Proteomics">
        <title>Extending ribosomal protein identifications to unsequenced bacterial strains using matrix-assisted laser desorption/ionization mass spectrometry.</title>
        <authorList>
            <person name="Suh M.-J."/>
            <person name="Hamburg D.M."/>
            <person name="Gregory S.T."/>
            <person name="Dahlberg A.E."/>
            <person name="Limbach P.A."/>
        </authorList>
    </citation>
    <scope>MASS SPECTROMETRY</scope>
    <source>
        <strain>ATCC 27634 / DSM 579 / HB8</strain>
    </source>
</reference>
<reference key="4">
    <citation type="journal article" date="2000" name="Nature">
        <title>Structure of the 30S ribosomal subunit.</title>
        <authorList>
            <person name="Wimberly B.T."/>
            <person name="Brodersen D.E."/>
            <person name="Clemons W.M. Jr."/>
            <person name="Morgan-Warren R.J."/>
            <person name="Carter A.P."/>
            <person name="Vonrhein C."/>
            <person name="Hartsch T."/>
            <person name="Ramakrishnan V."/>
        </authorList>
    </citation>
    <scope>X-RAY CRYSTALLOGRAPHY (3.05 ANGSTROMS) OF THE 30S SUBUNIT</scope>
</reference>
<reference key="5">
    <citation type="journal article" date="2000" name="Cell">
        <title>Structure of functionally activated small ribosomal subunit at 3.3 A resolution.</title>
        <authorList>
            <person name="Schluenzen F."/>
            <person name="Tocilj A."/>
            <person name="Zarivach R."/>
            <person name="Harms J."/>
            <person name="Gluehmann M."/>
            <person name="Janell D."/>
            <person name="Bashan A."/>
            <person name="Bartels H."/>
            <person name="Agmon I."/>
            <person name="Franceschi F."/>
            <person name="Yonath A."/>
        </authorList>
    </citation>
    <scope>X-RAY CRYSTALLOGRAPHY (3.3 ANGSTROMS) OF THE 30S SUBUNIT</scope>
</reference>
<reference key="6">
    <citation type="journal article" date="2000" name="Cell">
        <title>The structural basis for the action of the antibiotics tetracycline, pactamycin, and hygromycin B on the 30S ribosomal subunit.</title>
        <authorList>
            <person name="Brodersen D.E."/>
            <person name="Clemons W.M. Jr."/>
            <person name="Carter A.P."/>
            <person name="Morgan-Warren R.J."/>
            <person name="Wimberly B.T."/>
            <person name="Ramakrishnan V."/>
        </authorList>
    </citation>
    <scope>X-RAY CRYSTALLOGRAPHY (3.3 ANGSTROMS) OF THE 30S SUBUNIT</scope>
</reference>
<reference key="7">
    <citation type="journal article" date="2000" name="Nature">
        <title>Functional insights from the structure of the 30S ribosomal subunit and its interactions with antibiotics.</title>
        <authorList>
            <person name="Carter A.P."/>
            <person name="Clemons W.M. Jr."/>
            <person name="Brodersen D.E."/>
            <person name="Morgan-Warren R.J."/>
            <person name="Wimberly B.T."/>
            <person name="Ramakrishnan V."/>
        </authorList>
    </citation>
    <scope>X-RAY CRYSTALLOGRAPHY (3.0 ANGSTROMS) OF THE 30S SUBUNIT</scope>
</reference>
<reference key="8">
    <citation type="journal article" date="2001" name="Cell">
        <title>The path of messenger RNA through the ribosome.</title>
        <authorList>
            <person name="Yusupova G.Z."/>
            <person name="Yusupov M.M."/>
            <person name="Cate J.H.D."/>
            <person name="Noller H.F."/>
        </authorList>
    </citation>
    <scope>X-RAY CRYSTALLOGRAPHY (5.0 ANGSTROMS) OF THE RIBOSOME</scope>
</reference>
<reference key="9">
    <citation type="journal article" date="2001" name="EMBO J.">
        <title>Crystal structures of complexes of the small ribosomal subunit with tetracycline, edeine and IF3.</title>
        <authorList>
            <person name="Pioletti M."/>
            <person name="Schluenzen F."/>
            <person name="Harms J."/>
            <person name="Zarivach R."/>
            <person name="Gluehmann M."/>
            <person name="Avila H."/>
            <person name="Bashan A."/>
            <person name="Bartels H."/>
            <person name="Auerbach T."/>
            <person name="Jacobi C."/>
            <person name="Hartsch T."/>
            <person name="Yonath A."/>
            <person name="Franceschi F."/>
        </authorList>
    </citation>
    <scope>X-RAY CRYSTALLOGRAPHY (3.2 ANGSTROMS) OF THE 30S SUBUNIT</scope>
</reference>
<reference key="10">
    <citation type="journal article" date="2001" name="Science">
        <title>Crystal structure of an initiation factor bound to the 30S ribosomal subunit.</title>
        <authorList>
            <person name="Carter A.P."/>
            <person name="Clemons W.M. Jr."/>
            <person name="Brodersen D.E."/>
            <person name="Morgan-Warren R.J."/>
            <person name="Hartsch T."/>
            <person name="Wimberly B.T."/>
            <person name="Ramakrishnan V."/>
        </authorList>
    </citation>
    <scope>X-RAY CRYSTALLOGRAPHY (3.2 ANGSTROMS) OF THE 30S SUBUNIT</scope>
</reference>
<reference key="11">
    <citation type="journal article" date="2001" name="Science">
        <title>Crystal structure of the ribosome at 5.5 A resolution.</title>
        <authorList>
            <person name="Yusupov M.M."/>
            <person name="Yusupova G.Z."/>
            <person name="Baucom A."/>
            <person name="Lieberman K."/>
            <person name="Earnest T.N."/>
            <person name="Cate J.H.D."/>
            <person name="Noller H.F."/>
        </authorList>
    </citation>
    <scope>X-RAY CRYSTALLOGRAPHY (5.5 ANGSTROMS) OF THE RIBOSOME</scope>
</reference>
<reference key="12">
    <citation type="journal article" date="2001" name="Science">
        <title>Recognition of cognate transfer RNA by the 30S ribosomal subunit.</title>
        <authorList>
            <person name="Ogle J.M."/>
            <person name="Brodersen D.E."/>
            <person name="Clemons W.M. Jr."/>
            <person name="Tarry M.J."/>
            <person name="Carter A.P."/>
            <person name="Ramakrishnan V."/>
        </authorList>
    </citation>
    <scope>X-RAY CRYSTALLOGRAPHY (3.11 ANGSTROMS) OF THE 30S SUBUNIT</scope>
</reference>
<reference key="13">
    <citation type="journal article" date="2002" name="J. Mol. Biol.">
        <title>Crystal structure of the 30S ribosomal subunit from Thermus thermophilus: structure of the proteins and their interactions with 16S RNA.</title>
        <authorList>
            <person name="Brodersen D.E."/>
            <person name="Clemons W.M. Jr."/>
            <person name="Carter A.P."/>
            <person name="Wimberly B.T."/>
            <person name="Ramakrishnan V."/>
        </authorList>
    </citation>
    <scope>X-RAY CRYSTALLOGRAPHY (3.05 ANGSTROMS) OF THE 30S SUBUNIT</scope>
</reference>
<reference key="14">
    <citation type="journal article" date="2005" name="Cell">
        <title>Crystal structures of the ribosome in complex with release factors RF1 and RF2 bound to a cognate stop codon.</title>
        <authorList>
            <person name="Petry S."/>
            <person name="Brodersen D.E."/>
            <person name="Murphy F.V."/>
            <person name="Dunham C.M."/>
            <person name="Selmer M."/>
            <person name="Tarry M.J."/>
            <person name="Kelley A.C."/>
            <person name="Ramakrishnan V."/>
        </authorList>
    </citation>
    <scope>X-RAY CRYSTALLOGRAPHY (5.90 ANGSTROMS) OF 70S RIBOSOME IN COMPLEX WITH RF1 OR RF2</scope>
    <scope>SUBUNIT</scope>
</reference>
<reference key="15">
    <citation type="journal article" date="2008" name="Science">
        <title>Insights into translational termination from the structure of RF2 bound to the ribosome.</title>
        <authorList>
            <person name="Weixlbaumer A."/>
            <person name="Jin H."/>
            <person name="Neubauer C."/>
            <person name="Voorhees R.M."/>
            <person name="Petry S."/>
            <person name="Kelley A.C."/>
            <person name="Ramakrishnan V."/>
        </authorList>
    </citation>
    <scope>X-RAY CRYSTALLOGRAPHY (3.45 ANGSTROMS) OF 70S RIBOSOME IN COMPLEX WITH RF2</scope>
    <scope>SUBUNIT</scope>
</reference>
<reference key="16">
    <citation type="journal article" date="2010" name="Proc. Natl. Acad. Sci. U.S.A.">
        <title>Structure of the 70S ribosome bound to release factor 2 and a substrate analog provides insights into catalysis of peptide release.</title>
        <authorList>
            <person name="Jin H."/>
            <person name="Kelley A.C."/>
            <person name="Loakes D."/>
            <person name="Ramakrishnan V."/>
        </authorList>
    </citation>
    <scope>X-RAY CRYSTALLOGRAPHY (3.10 ANGSTROMS) OF 70S RIBOSOME IN COMPLEX WITH RF2</scope>
    <scope>SUBUNIT</scope>
</reference>
<comment type="function">
    <text>Located at the top of the head of the 30S subunit, extending towards the 50S subunit, which it may contact in the 70S complex. Contacts several RNA helices of the 16S rRNA.</text>
</comment>
<comment type="subunit">
    <text>Part of the 30S ribosomal subunit. Forms a loose dimer with protein S13.</text>
</comment>
<comment type="mass spectrometry" mass="10451.0" method="MALDI" evidence="1"/>
<comment type="similarity">
    <text evidence="3">Belongs to the universal ribosomal protein uS19 family.</text>
</comment>